<keyword id="KW-0002">3D-structure</keyword>
<keyword id="KW-0025">Alternative splicing</keyword>
<keyword id="KW-0067">ATP-binding</keyword>
<keyword id="KW-0072">Autophagy</keyword>
<keyword id="KW-0090">Biological rhythms</keyword>
<keyword id="KW-0152">Cholesterol biosynthesis</keyword>
<keyword id="KW-0153">Cholesterol metabolism</keyword>
<keyword id="KW-0156">Chromatin regulator</keyword>
<keyword id="KW-0963">Cytoplasm</keyword>
<keyword id="KW-0275">Fatty acid biosynthesis</keyword>
<keyword id="KW-0276">Fatty acid metabolism</keyword>
<keyword id="KW-0325">Glycoprotein</keyword>
<keyword id="KW-0945">Host-virus interaction</keyword>
<keyword id="KW-0418">Kinase</keyword>
<keyword id="KW-0444">Lipid biosynthesis</keyword>
<keyword id="KW-0443">Lipid metabolism</keyword>
<keyword id="KW-0460">Magnesium</keyword>
<keyword id="KW-0479">Metal-binding</keyword>
<keyword id="KW-0547">Nucleotide-binding</keyword>
<keyword id="KW-0539">Nucleus</keyword>
<keyword id="KW-0597">Phosphoprotein</keyword>
<keyword id="KW-1267">Proteomics identification</keyword>
<keyword id="KW-1185">Reference proteome</keyword>
<keyword id="KW-0723">Serine/threonine-protein kinase</keyword>
<keyword id="KW-0752">Steroid biosynthesis</keyword>
<keyword id="KW-0753">Steroid metabolism</keyword>
<keyword id="KW-0756">Sterol biosynthesis</keyword>
<keyword id="KW-1207">Sterol metabolism</keyword>
<keyword id="KW-0804">Transcription</keyword>
<keyword id="KW-0805">Transcription regulation</keyword>
<keyword id="KW-0808">Transferase</keyword>
<keyword id="KW-0832">Ubl conjugation</keyword>
<keyword id="KW-0879">Wnt signaling pathway</keyword>
<gene>
    <name evidence="43" type="primary">PRKAA1</name>
    <name type="synonym">AMPK1</name>
</gene>
<name>AAPK1_HUMAN</name>
<accession>Q13131</accession>
<accession>A8MTQ6</accession>
<accession>B2R7E1</accession>
<accession>O00286</accession>
<accession>Q5D0E1</accession>
<accession>Q86VS1</accession>
<accession>Q9UNQ4</accession>
<evidence type="ECO:0000250" key="1">
    <source>
        <dbReference type="UniProtKB" id="P54645"/>
    </source>
</evidence>
<evidence type="ECO:0000250" key="2">
    <source>
        <dbReference type="UniProtKB" id="Q5EG47"/>
    </source>
</evidence>
<evidence type="ECO:0000255" key="3">
    <source>
        <dbReference type="PROSITE-ProRule" id="PRU00159"/>
    </source>
</evidence>
<evidence type="ECO:0000255" key="4">
    <source>
        <dbReference type="PROSITE-ProRule" id="PRU10027"/>
    </source>
</evidence>
<evidence type="ECO:0000256" key="5">
    <source>
        <dbReference type="SAM" id="MobiDB-lite"/>
    </source>
</evidence>
<evidence type="ECO:0000269" key="6">
    <source>
    </source>
</evidence>
<evidence type="ECO:0000269" key="7">
    <source>
    </source>
</evidence>
<evidence type="ECO:0000269" key="8">
    <source>
    </source>
</evidence>
<evidence type="ECO:0000269" key="9">
    <source>
    </source>
</evidence>
<evidence type="ECO:0000269" key="10">
    <source>
    </source>
</evidence>
<evidence type="ECO:0000269" key="11">
    <source>
    </source>
</evidence>
<evidence type="ECO:0000269" key="12">
    <source>
    </source>
</evidence>
<evidence type="ECO:0000269" key="13">
    <source>
    </source>
</evidence>
<evidence type="ECO:0000269" key="14">
    <source>
    </source>
</evidence>
<evidence type="ECO:0000269" key="15">
    <source>
    </source>
</evidence>
<evidence type="ECO:0000269" key="16">
    <source>
    </source>
</evidence>
<evidence type="ECO:0000269" key="17">
    <source>
    </source>
</evidence>
<evidence type="ECO:0000269" key="18">
    <source>
    </source>
</evidence>
<evidence type="ECO:0000269" key="19">
    <source>
    </source>
</evidence>
<evidence type="ECO:0000269" key="20">
    <source>
    </source>
</evidence>
<evidence type="ECO:0000269" key="21">
    <source>
    </source>
</evidence>
<evidence type="ECO:0000269" key="22">
    <source>
    </source>
</evidence>
<evidence type="ECO:0000269" key="23">
    <source>
    </source>
</evidence>
<evidence type="ECO:0000269" key="24">
    <source>
    </source>
</evidence>
<evidence type="ECO:0000269" key="25">
    <source>
    </source>
</evidence>
<evidence type="ECO:0000269" key="26">
    <source>
    </source>
</evidence>
<evidence type="ECO:0000269" key="27">
    <source>
    </source>
</evidence>
<evidence type="ECO:0000269" key="28">
    <source>
    </source>
</evidence>
<evidence type="ECO:0000269" key="29">
    <source>
    </source>
</evidence>
<evidence type="ECO:0000269" key="30">
    <source>
    </source>
</evidence>
<evidence type="ECO:0000269" key="31">
    <source>
    </source>
</evidence>
<evidence type="ECO:0000269" key="32">
    <source>
    </source>
</evidence>
<evidence type="ECO:0000269" key="33">
    <source>
    </source>
</evidence>
<evidence type="ECO:0000269" key="34">
    <source>
    </source>
</evidence>
<evidence type="ECO:0000269" key="35">
    <source>
    </source>
</evidence>
<evidence type="ECO:0000269" key="36">
    <source>
    </source>
</evidence>
<evidence type="ECO:0000269" key="37">
    <source>
    </source>
</evidence>
<evidence type="ECO:0000269" key="38">
    <source>
    </source>
</evidence>
<evidence type="ECO:0000303" key="39">
    <source>
    </source>
</evidence>
<evidence type="ECO:0000303" key="40">
    <source>
    </source>
</evidence>
<evidence type="ECO:0000303" key="41">
    <source>
    </source>
</evidence>
<evidence type="ECO:0000305" key="42"/>
<evidence type="ECO:0000312" key="43">
    <source>
        <dbReference type="HGNC" id="HGNC:9376"/>
    </source>
</evidence>
<evidence type="ECO:0007744" key="44">
    <source>
    </source>
</evidence>
<evidence type="ECO:0007744" key="45">
    <source>
    </source>
</evidence>
<evidence type="ECO:0007744" key="46">
    <source>
    </source>
</evidence>
<evidence type="ECO:0007744" key="47">
    <source>
    </source>
</evidence>
<evidence type="ECO:0007744" key="48">
    <source>
    </source>
</evidence>
<evidence type="ECO:0007744" key="49">
    <source>
    </source>
</evidence>
<evidence type="ECO:0007829" key="50">
    <source>
        <dbReference type="PDB" id="4RED"/>
    </source>
</evidence>
<evidence type="ECO:0007829" key="51">
    <source>
        <dbReference type="PDB" id="6C9G"/>
    </source>
</evidence>
<evidence type="ECO:0007829" key="52">
    <source>
        <dbReference type="PDB" id="6C9H"/>
    </source>
</evidence>
<evidence type="ECO:0007829" key="53">
    <source>
        <dbReference type="PDB" id="6C9J"/>
    </source>
</evidence>
<evidence type="ECO:0007829" key="54">
    <source>
        <dbReference type="PDB" id="7JHG"/>
    </source>
</evidence>
<sequence length="559" mass="64009">MRRLSSWRKMATAEKQKHDGRVKIGHYILGDTLGVGTFGKVKVGKHELTGHKVAVKILNRQKIRSLDVVGKIRREIQNLKLFRHPHIIKLYQVISTPSDIFMVMEYVSGGELFDYICKNGRLDEKESRRLFQQILSGVDYCHRHMVVHRDLKPENVLLDAHMNAKIADFGLSNMMSDGEFLRTSCGSPNYAAPEVISGRLYAGPEVDIWSSGVILYALLCGTLPFDDDHVPTLFKKICDGIFYTPQYLNPSVISLLKHMLQVDPMKRATIKDIREHEWFKQDLPKYLFPEDPSYSSTMIDDEALKEVCEKFECSEEEVLSCLYNRNHQDPLAVAYHLIIDNRRIMNEAKDFYLATSPPDSFLDDHHLTRPHPERVPFLVAETPRARHTLDELNPQKSKHQGVRKAKWHLGIRSQSRPNDIMAEVCRAIKQLDYEWKVVNPYYLRVRRKNPVTSTYSKMSLQLYQVDSRTYLLDFRSIDDEITEAKSGTATPQRSGSVSNYRSCQRSDSDAEAQGKSSEVSLTSSVTSLDSSPVDLTPRPGSHTIEFFEMCANLIKILAQ</sequence>
<reference key="1">
    <citation type="journal article" date="2004" name="Nature">
        <title>The DNA sequence and comparative analysis of human chromosome 5.</title>
        <authorList>
            <person name="Schmutz J."/>
            <person name="Martin J."/>
            <person name="Terry A."/>
            <person name="Couronne O."/>
            <person name="Grimwood J."/>
            <person name="Lowry S."/>
            <person name="Gordon L.A."/>
            <person name="Scott D."/>
            <person name="Xie G."/>
            <person name="Huang W."/>
            <person name="Hellsten U."/>
            <person name="Tran-Gyamfi M."/>
            <person name="She X."/>
            <person name="Prabhakar S."/>
            <person name="Aerts A."/>
            <person name="Altherr M."/>
            <person name="Bajorek E."/>
            <person name="Black S."/>
            <person name="Branscomb E."/>
            <person name="Caoile C."/>
            <person name="Challacombe J.F."/>
            <person name="Chan Y.M."/>
            <person name="Denys M."/>
            <person name="Detter J.C."/>
            <person name="Escobar J."/>
            <person name="Flowers D."/>
            <person name="Fotopulos D."/>
            <person name="Glavina T."/>
            <person name="Gomez M."/>
            <person name="Gonzales E."/>
            <person name="Goodstein D."/>
            <person name="Grigoriev I."/>
            <person name="Groza M."/>
            <person name="Hammon N."/>
            <person name="Hawkins T."/>
            <person name="Haydu L."/>
            <person name="Israni S."/>
            <person name="Jett J."/>
            <person name="Kadner K."/>
            <person name="Kimball H."/>
            <person name="Kobayashi A."/>
            <person name="Lopez F."/>
            <person name="Lou Y."/>
            <person name="Martinez D."/>
            <person name="Medina C."/>
            <person name="Morgan J."/>
            <person name="Nandkeshwar R."/>
            <person name="Noonan J.P."/>
            <person name="Pitluck S."/>
            <person name="Pollard M."/>
            <person name="Predki P."/>
            <person name="Priest J."/>
            <person name="Ramirez L."/>
            <person name="Retterer J."/>
            <person name="Rodriguez A."/>
            <person name="Rogers S."/>
            <person name="Salamov A."/>
            <person name="Salazar A."/>
            <person name="Thayer N."/>
            <person name="Tice H."/>
            <person name="Tsai M."/>
            <person name="Ustaszewska A."/>
            <person name="Vo N."/>
            <person name="Wheeler J."/>
            <person name="Wu K."/>
            <person name="Yang J."/>
            <person name="Dickson M."/>
            <person name="Cheng J.-F."/>
            <person name="Eichler E.E."/>
            <person name="Olsen A."/>
            <person name="Pennacchio L.A."/>
            <person name="Rokhsar D.S."/>
            <person name="Richardson P."/>
            <person name="Lucas S.M."/>
            <person name="Myers R.M."/>
            <person name="Rubin E.M."/>
        </authorList>
    </citation>
    <scope>NUCLEOTIDE SEQUENCE [LARGE SCALE GENOMIC DNA]</scope>
</reference>
<reference key="2">
    <citation type="journal article" date="2004" name="Genome Res.">
        <title>The status, quality, and expansion of the NIH full-length cDNA project: the Mammalian Gene Collection (MGC).</title>
        <authorList>
            <consortium name="The MGC Project Team"/>
        </authorList>
    </citation>
    <scope>NUCLEOTIDE SEQUENCE [LARGE SCALE MRNA] (ISOFORMS 1 AND 2)</scope>
    <scope>VARIANT LEU-10</scope>
    <source>
        <tissue>Brain</tissue>
        <tissue>Testis</tissue>
    </source>
</reference>
<reference key="3">
    <citation type="submission" date="1999-01" db="EMBL/GenBank/DDBJ databases">
        <title>Nucleotide sequence of cDNA for human AMP-activated protein kinase alpha-1.</title>
        <authorList>
            <person name="Yano K."/>
        </authorList>
    </citation>
    <scope>NUCLEOTIDE SEQUENCE [MRNA] OF 3-559 (ISOFORM 1)</scope>
    <source>
        <tissue>Mammary gland</tissue>
    </source>
</reference>
<reference key="4">
    <citation type="journal article" date="2004" name="Nat. Genet.">
        <title>Complete sequencing and characterization of 21,243 full-length human cDNAs.</title>
        <authorList>
            <person name="Ota T."/>
            <person name="Suzuki Y."/>
            <person name="Nishikawa T."/>
            <person name="Otsuki T."/>
            <person name="Sugiyama T."/>
            <person name="Irie R."/>
            <person name="Wakamatsu A."/>
            <person name="Hayashi K."/>
            <person name="Sato H."/>
            <person name="Nagai K."/>
            <person name="Kimura K."/>
            <person name="Makita H."/>
            <person name="Sekine M."/>
            <person name="Obayashi M."/>
            <person name="Nishi T."/>
            <person name="Shibahara T."/>
            <person name="Tanaka T."/>
            <person name="Ishii S."/>
            <person name="Yamamoto J."/>
            <person name="Saito K."/>
            <person name="Kawai Y."/>
            <person name="Isono Y."/>
            <person name="Nakamura Y."/>
            <person name="Nagahari K."/>
            <person name="Murakami K."/>
            <person name="Yasuda T."/>
            <person name="Iwayanagi T."/>
            <person name="Wagatsuma M."/>
            <person name="Shiratori A."/>
            <person name="Sudo H."/>
            <person name="Hosoiri T."/>
            <person name="Kaku Y."/>
            <person name="Kodaira H."/>
            <person name="Kondo H."/>
            <person name="Sugawara M."/>
            <person name="Takahashi M."/>
            <person name="Kanda K."/>
            <person name="Yokoi T."/>
            <person name="Furuya T."/>
            <person name="Kikkawa E."/>
            <person name="Omura Y."/>
            <person name="Abe K."/>
            <person name="Kamihara K."/>
            <person name="Katsuta N."/>
            <person name="Sato K."/>
            <person name="Tanikawa M."/>
            <person name="Yamazaki M."/>
            <person name="Ninomiya K."/>
            <person name="Ishibashi T."/>
            <person name="Yamashita H."/>
            <person name="Murakawa K."/>
            <person name="Fujimori K."/>
            <person name="Tanai H."/>
            <person name="Kimata M."/>
            <person name="Watanabe M."/>
            <person name="Hiraoka S."/>
            <person name="Chiba Y."/>
            <person name="Ishida S."/>
            <person name="Ono Y."/>
            <person name="Takiguchi S."/>
            <person name="Watanabe S."/>
            <person name="Yosida M."/>
            <person name="Hotuta T."/>
            <person name="Kusano J."/>
            <person name="Kanehori K."/>
            <person name="Takahashi-Fujii A."/>
            <person name="Hara H."/>
            <person name="Tanase T.-O."/>
            <person name="Nomura Y."/>
            <person name="Togiya S."/>
            <person name="Komai F."/>
            <person name="Hara R."/>
            <person name="Takeuchi K."/>
            <person name="Arita M."/>
            <person name="Imose N."/>
            <person name="Musashino K."/>
            <person name="Yuuki H."/>
            <person name="Oshima A."/>
            <person name="Sasaki N."/>
            <person name="Aotsuka S."/>
            <person name="Yoshikawa Y."/>
            <person name="Matsunawa H."/>
            <person name="Ichihara T."/>
            <person name="Shiohata N."/>
            <person name="Sano S."/>
            <person name="Moriya S."/>
            <person name="Momiyama H."/>
            <person name="Satoh N."/>
            <person name="Takami S."/>
            <person name="Terashima Y."/>
            <person name="Suzuki O."/>
            <person name="Nakagawa S."/>
            <person name="Senoh A."/>
            <person name="Mizoguchi H."/>
            <person name="Goto Y."/>
            <person name="Shimizu F."/>
            <person name="Wakebe H."/>
            <person name="Hishigaki H."/>
            <person name="Watanabe T."/>
            <person name="Sugiyama A."/>
            <person name="Takemoto M."/>
            <person name="Kawakami B."/>
            <person name="Yamazaki M."/>
            <person name="Watanabe K."/>
            <person name="Kumagai A."/>
            <person name="Itakura S."/>
            <person name="Fukuzumi Y."/>
            <person name="Fujimori Y."/>
            <person name="Komiyama M."/>
            <person name="Tashiro H."/>
            <person name="Tanigami A."/>
            <person name="Fujiwara T."/>
            <person name="Ono T."/>
            <person name="Yamada K."/>
            <person name="Fujii Y."/>
            <person name="Ozaki K."/>
            <person name="Hirao M."/>
            <person name="Ohmori Y."/>
            <person name="Kawabata A."/>
            <person name="Hikiji T."/>
            <person name="Kobatake N."/>
            <person name="Inagaki H."/>
            <person name="Ikema Y."/>
            <person name="Okamoto S."/>
            <person name="Okitani R."/>
            <person name="Kawakami T."/>
            <person name="Noguchi S."/>
            <person name="Itoh T."/>
            <person name="Shigeta K."/>
            <person name="Senba T."/>
            <person name="Matsumura K."/>
            <person name="Nakajima Y."/>
            <person name="Mizuno T."/>
            <person name="Morinaga M."/>
            <person name="Sasaki M."/>
            <person name="Togashi T."/>
            <person name="Oyama M."/>
            <person name="Hata H."/>
            <person name="Watanabe M."/>
            <person name="Komatsu T."/>
            <person name="Mizushima-Sugano J."/>
            <person name="Satoh T."/>
            <person name="Shirai Y."/>
            <person name="Takahashi Y."/>
            <person name="Nakagawa K."/>
            <person name="Okumura K."/>
            <person name="Nagase T."/>
            <person name="Nomura N."/>
            <person name="Kikuchi H."/>
            <person name="Masuho Y."/>
            <person name="Yamashita R."/>
            <person name="Nakai K."/>
            <person name="Yada T."/>
            <person name="Nakamura Y."/>
            <person name="Ohara O."/>
            <person name="Isogai T."/>
            <person name="Sugano S."/>
        </authorList>
    </citation>
    <scope>NUCLEOTIDE SEQUENCE [LARGE SCALE MRNA] OF 5-559 (ISOFORM 1)</scope>
    <source>
        <tissue>Trachea</tissue>
    </source>
</reference>
<reference key="5">
    <citation type="journal article" date="2000" name="Genome Res.">
        <title>Cloning and functional analysis of cDNAs with open reading frames for 300 previously undefined genes expressed in CD34+ hematopoietic stem/progenitor cells.</title>
        <authorList>
            <person name="Zhang Q.-H."/>
            <person name="Ye M."/>
            <person name="Wu X.-Y."/>
            <person name="Ren S.-X."/>
            <person name="Zhao M."/>
            <person name="Zhao C.-J."/>
            <person name="Fu G."/>
            <person name="Shen Y."/>
            <person name="Fan H.-Y."/>
            <person name="Lu G."/>
            <person name="Zhong M."/>
            <person name="Xu X.-R."/>
            <person name="Han Z.-G."/>
            <person name="Zhang J.-W."/>
            <person name="Tao J."/>
            <person name="Huang Q.-H."/>
            <person name="Zhou J."/>
            <person name="Hu G.-X."/>
            <person name="Gu J."/>
            <person name="Chen S.-J."/>
            <person name="Chen Z."/>
        </authorList>
    </citation>
    <scope>NUCLEOTIDE SEQUENCE [LARGE SCALE MRNA] OF 9-559 (ISOFORM 1)</scope>
    <source>
        <tissue>Umbilical cord blood</tissue>
    </source>
</reference>
<reference key="6">
    <citation type="submission" date="1995-04" db="EMBL/GenBank/DDBJ databases">
        <authorList>
            <person name="Taboada E.N."/>
            <person name="Hickey D.A."/>
        </authorList>
    </citation>
    <scope>NUCLEOTIDE SEQUENCE [MRNA] OF 36-209 (ISOFORM 1)</scope>
    <source>
        <tissue>Intestine</tissue>
    </source>
</reference>
<reference key="7">
    <citation type="journal article" date="1996" name="J. Biol. Chem.">
        <title>Mammalian AMP-activated protein kinase subfamily.</title>
        <authorList>
            <person name="Stapleton D."/>
            <person name="Mitchelhill K.I."/>
            <person name="Gao G."/>
            <person name="Widmer J."/>
            <person name="Michell B.J."/>
            <person name="Teh T."/>
            <person name="House C.M."/>
            <person name="Fernandez C.S."/>
            <person name="Cox T."/>
            <person name="Witters L.A."/>
            <person name="Kemp B.E."/>
        </authorList>
    </citation>
    <scope>NUCLEOTIDE SEQUENCE [MRNA] OF 303-559 (ISOFORMS 1/2)</scope>
    <source>
        <tissue>Liver</tissue>
    </source>
</reference>
<reference key="8">
    <citation type="journal article" date="1998" name="J. Biol. Chem.">
        <title>Functional domains of the alpha1 catalytic subunit of the AMP-activated protein kinase.</title>
        <authorList>
            <person name="Crute B.E."/>
            <person name="Seefeld K."/>
            <person name="Gamble J."/>
            <person name="Kemp B.E."/>
            <person name="Witters L.A."/>
        </authorList>
    </citation>
    <scope>DOMAIN AIS</scope>
</reference>
<reference key="9">
    <citation type="journal article" date="2001" name="Biochem. Biophys. Res. Commun.">
        <title>Cell cycle regulation via p53 phosphorylation by a 5'-AMP activated protein kinase activator, 5-aminoimidazole-4-carboxamide-1-beta-D-ribofuranoside, in a human hepatocellular carcinoma cell line.</title>
        <authorList>
            <person name="Imamura K."/>
            <person name="Ogura T."/>
            <person name="Kishimoto A."/>
            <person name="Kaminishi M."/>
            <person name="Esumi H."/>
        </authorList>
    </citation>
    <scope>FUNCTION</scope>
</reference>
<reference key="10">
    <citation type="journal article" date="2001" name="J. Biol. Chem.">
        <title>Regulation of transcription by AMP-activated protein kinase: phosphorylation of p300 blocks its interaction with nuclear receptors.</title>
        <authorList>
            <person name="Yang W."/>
            <person name="Hong Y.H."/>
            <person name="Shen X.Q."/>
            <person name="Frankowski C."/>
            <person name="Camp H.S."/>
            <person name="Leff T."/>
        </authorList>
    </citation>
    <scope>FUNCTION IN PHOSPHORYLATION OF EP300</scope>
</reference>
<reference key="11">
    <citation type="journal article" date="2001" name="J. Clin. Invest.">
        <title>Role of AMP-activated protein kinase in mechanism of metformin action.</title>
        <authorList>
            <person name="Zhou G."/>
            <person name="Myers R."/>
            <person name="Li Y."/>
            <person name="Chen Y."/>
            <person name="Shen X."/>
            <person name="Fenyk-Melody J."/>
            <person name="Wu M."/>
            <person name="Ventre J."/>
            <person name="Doebber T."/>
            <person name="Fujii N."/>
            <person name="Musi N."/>
            <person name="Hirshman M.F."/>
            <person name="Goodyear L.J."/>
            <person name="Moller D.E."/>
        </authorList>
    </citation>
    <scope>ACTIVITY REGULATION</scope>
</reference>
<reference key="12">
    <citation type="journal article" date="2003" name="Am. J. Physiol.">
        <title>Physiological modulation of CFTR activity by AMP-activated protein kinase in polarized T84 cells.</title>
        <authorList>
            <person name="Hallows K.R."/>
            <person name="Kobinger G.P."/>
            <person name="Wilson J.M."/>
            <person name="Witters L.A."/>
            <person name="Foskett J.K."/>
        </authorList>
    </citation>
    <scope>FUNCTION IN PHOSPHORYLATION OF CFTR</scope>
</reference>
<reference key="13">
    <citation type="journal article" date="2003" name="Cell">
        <title>TSC2 mediates cellular energy response to control cell growth and survival.</title>
        <authorList>
            <person name="Inoki K."/>
            <person name="Zhu T."/>
            <person name="Guan K.L."/>
        </authorList>
    </citation>
    <scope>FUNCTION IN PHOSPHORYLATION OF TSC2</scope>
</reference>
<reference key="14">
    <citation type="journal article" date="2004" name="EMBO J.">
        <title>LKB1 is a master kinase that activates 13 kinases of the AMPK subfamily, including MARK/PAR-1.</title>
        <authorList>
            <person name="Lizcano J.M."/>
            <person name="Goeransson O."/>
            <person name="Toth R."/>
            <person name="Deak M."/>
            <person name="Morrice N.A."/>
            <person name="Boudeau J."/>
            <person name="Hawley S.A."/>
            <person name="Udd L."/>
            <person name="Maekelae T.P."/>
            <person name="Hardie D.G."/>
            <person name="Alessi D.R."/>
        </authorList>
    </citation>
    <scope>PHOSPHORYLATION AT THR-183</scope>
    <scope>ACTIVITY REGULATION</scope>
</reference>
<reference key="15">
    <citation type="journal article" date="2005" name="Cell Metab.">
        <title>Calmodulin-dependent protein kinase kinase-beta is an alternative upstream kinase for AMP-activated protein kinase.</title>
        <authorList>
            <person name="Hawley S.A."/>
            <person name="Pan D.A."/>
            <person name="Mustard K.J."/>
            <person name="Ross L."/>
            <person name="Bain J."/>
            <person name="Edelman A.M."/>
            <person name="Frenguelli B.G."/>
            <person name="Hardie D.G."/>
        </authorList>
    </citation>
    <scope>PHOSPHORYLATION AT THR-183</scope>
    <scope>ACTIVITY REGULATION</scope>
</reference>
<reference key="16">
    <citation type="journal article" date="2005" name="J. Biol. Chem.">
        <title>The Ca2+/calmodulin-dependent protein kinase kinases are AMP-activated protein kinase kinases.</title>
        <authorList>
            <person name="Hurley R.L."/>
            <person name="Anderson K.A."/>
            <person name="Franzone J.M."/>
            <person name="Kemp B.E."/>
            <person name="Means A.R."/>
            <person name="Witters L.A."/>
        </authorList>
    </citation>
    <scope>PHOSPHORYLATION AT THR-183</scope>
    <scope>ACTIVITY REGULATION</scope>
</reference>
<reference key="17">
    <citation type="journal article" date="2005" name="Mol. Cell">
        <title>AMP-activated protein kinase induces a p53-dependent metabolic checkpoint.</title>
        <authorList>
            <person name="Jones R.G."/>
            <person name="Plas D.R."/>
            <person name="Kubek S."/>
            <person name="Buzzai M."/>
            <person name="Mu J."/>
            <person name="Xu Y."/>
            <person name="Birnbaum M.J."/>
            <person name="Thompson C.B."/>
        </authorList>
    </citation>
    <scope>FUNCTION</scope>
    <scope>SUBCELLULAR LOCATION</scope>
</reference>
<reference key="18">
    <citation type="journal article" date="2006" name="Proc. Natl. Acad. Sci. U.S.A.">
        <title>Folliculin encoded by the BHD gene interacts with a binding protein, FNIP1, and AMPK, and is involved in AMPK and mTOR signaling.</title>
        <authorList>
            <person name="Baba M."/>
            <person name="Hong S.-B."/>
            <person name="Sharma N."/>
            <person name="Warren M.B."/>
            <person name="Nickerson M.L."/>
            <person name="Iwamatsu A."/>
            <person name="Esposito D."/>
            <person name="Gillette W.K."/>
            <person name="Hopkins R.F. III"/>
            <person name="Hartley J.L."/>
            <person name="Furihata M."/>
            <person name="Oishi S."/>
            <person name="Zhen W."/>
            <person name="Burke T.R. Jr."/>
            <person name="Linehan W.M."/>
            <person name="Schmidt L.S."/>
            <person name="Zbar B."/>
        </authorList>
    </citation>
    <scope>INTERACTION WITH FNIP1</scope>
</reference>
<reference key="19">
    <citation type="journal article" date="2007" name="J. Biol. Chem.">
        <title>Conserved alpha-helix acts as autoinhibitory sequence in AMP-activated protein kinase alpha subunits.</title>
        <authorList>
            <person name="Pang T."/>
            <person name="Xiong B."/>
            <person name="Li J.Y."/>
            <person name="Qiu B.Y."/>
            <person name="Jin G.Z."/>
            <person name="Shen J.K."/>
            <person name="Li J."/>
        </authorList>
    </citation>
    <scope>DOMAIN AIS</scope>
    <scope>MUTAGENESIS OF VAL-307</scope>
</reference>
<reference key="20">
    <citation type="journal article" date="2007" name="J. Biol. Chem.">
        <title>The energy sensor AMP-activated protein kinase directly regulates the mammalian FOXO3 transcription factor.</title>
        <authorList>
            <person name="Greer E.L."/>
            <person name="Oskoui P.R."/>
            <person name="Banko M.R."/>
            <person name="Maniar J.M."/>
            <person name="Gygi M.P."/>
            <person name="Gygi S.P."/>
            <person name="Brunet A."/>
        </authorList>
    </citation>
    <scope>FUNCTION IN PHOSPHORYLATION OF FOXO3</scope>
</reference>
<reference key="21">
    <citation type="journal article" date="2007" name="Nature">
        <title>Energy-dependent regulation of cell structure by AMP-activated protein kinase.</title>
        <authorList>
            <person name="Lee J.H."/>
            <person name="Koh H."/>
            <person name="Kim M."/>
            <person name="Kim Y."/>
            <person name="Lee S.Y."/>
            <person name="Karess R.E."/>
            <person name="Lee S.H."/>
            <person name="Shong M."/>
            <person name="Kim J.M."/>
            <person name="Kim J."/>
            <person name="Chung J."/>
        </authorList>
    </citation>
    <scope>FUNCTION IN CELL POLARITY</scope>
</reference>
<reference key="22">
    <citation type="journal article" date="2008" name="Diabetes">
        <title>AMP-activated protein kinase regulates GLUT4 transcription by phosphorylating histone deacetylase 5.</title>
        <authorList>
            <person name="McGee S.L."/>
            <person name="van Denderen B.J."/>
            <person name="Howlett K.F."/>
            <person name="Mollica J."/>
            <person name="Schertzer J.D."/>
            <person name="Kemp B.E."/>
            <person name="Hargreaves M."/>
        </authorList>
    </citation>
    <scope>FUNCTION IN PHOSPHORYLATION OF HDAC5</scope>
</reference>
<reference key="23">
    <citation type="journal article" date="2008" name="Gene">
        <title>Identification and characterization of a novel folliculin-interacting protein FNIP2.</title>
        <authorList>
            <person name="Hasumi H."/>
            <person name="Baba M."/>
            <person name="Hong S.-B."/>
            <person name="Hasumi Y."/>
            <person name="Huang Y."/>
            <person name="Yao M."/>
            <person name="Valera V.A."/>
            <person name="Linehan W.M."/>
            <person name="Schmidt L.S."/>
        </authorList>
    </citation>
    <scope>INTERACTION WITH FNIP2</scope>
</reference>
<reference key="24">
    <citation type="journal article" date="2008" name="J. Proteome Res.">
        <title>Combining protein-based IMAC, peptide-based IMAC, and MudPIT for efficient phosphoproteomic analysis.</title>
        <authorList>
            <person name="Cantin G.T."/>
            <person name="Yi W."/>
            <person name="Lu B."/>
            <person name="Park S.K."/>
            <person name="Xu T."/>
            <person name="Lee J.-D."/>
            <person name="Yates J.R. III"/>
        </authorList>
    </citation>
    <scope>PHOSPHORYLATION [LARGE SCALE ANALYSIS] AT THR-382</scope>
    <scope>IDENTIFICATION BY MASS SPECTROMETRY [LARGE SCALE ANALYSIS]</scope>
    <source>
        <tissue>Cervix carcinoma</tissue>
    </source>
</reference>
<reference key="25">
    <citation type="journal article" date="2008" name="J. Proteome Res.">
        <title>Phosphoproteome of resting human platelets.</title>
        <authorList>
            <person name="Zahedi R.P."/>
            <person name="Lewandrowski U."/>
            <person name="Wiesner J."/>
            <person name="Wortelkamp S."/>
            <person name="Moebius J."/>
            <person name="Schuetz C."/>
            <person name="Walter U."/>
            <person name="Gambaryan S."/>
            <person name="Sickmann A."/>
        </authorList>
    </citation>
    <scope>IDENTIFICATION BY MASS SPECTROMETRY [LARGE SCALE ANALYSIS]</scope>
    <source>
        <tissue>Platelet</tissue>
    </source>
</reference>
<reference key="26">
    <citation type="journal article" date="2008" name="Mol. Cell">
        <title>AMPK phosphorylation of raptor mediates a metabolic checkpoint.</title>
        <authorList>
            <person name="Gwinn D.M."/>
            <person name="Shackelford D.B."/>
            <person name="Egan D.F."/>
            <person name="Mihaylova M.M."/>
            <person name="Mery A."/>
            <person name="Vasquez D.S."/>
            <person name="Turk B.E."/>
            <person name="Shaw R.J."/>
        </authorList>
    </citation>
    <scope>FUNCTION IN PHOSPHORYLATION OF RPTOR</scope>
</reference>
<reference key="27">
    <citation type="journal article" date="2008" name="Mol. Cell">
        <title>Kinase-selective enrichment enables quantitative phosphoproteomics of the kinome across the cell cycle.</title>
        <authorList>
            <person name="Daub H."/>
            <person name="Olsen J.V."/>
            <person name="Bairlein M."/>
            <person name="Gnad F."/>
            <person name="Oppermann F.S."/>
            <person name="Korner R."/>
            <person name="Greff Z."/>
            <person name="Keri G."/>
            <person name="Stemmann O."/>
            <person name="Mann M."/>
        </authorList>
    </citation>
    <scope>IDENTIFICATION BY MASS SPECTROMETRY [LARGE SCALE ANALYSIS]</scope>
    <source>
        <tissue>Cervix carcinoma</tissue>
    </source>
</reference>
<reference key="28">
    <citation type="journal article" date="2008" name="Oncogene">
        <title>Interaction of folliculin (Birt-Hogg-Dube gene product) with a novel Fnip1-like (FnipL/Fnip2) protein.</title>
        <authorList>
            <person name="Takagi Y."/>
            <person name="Kobayashi T."/>
            <person name="Shiono M."/>
            <person name="Wang L."/>
            <person name="Piao X."/>
            <person name="Sun G."/>
            <person name="Zhang D."/>
            <person name="Abe M."/>
            <person name="Hagiwara Y."/>
            <person name="Takahashi K."/>
            <person name="Hino O."/>
        </authorList>
    </citation>
    <scope>INTERACTION WITH FNIP2</scope>
</reference>
<reference key="29">
    <citation type="journal article" date="2008" name="Proc. Natl. Acad. Sci. U.S.A.">
        <title>A quantitative atlas of mitotic phosphorylation.</title>
        <authorList>
            <person name="Dephoure N."/>
            <person name="Zhou C."/>
            <person name="Villen J."/>
            <person name="Beausoleil S.A."/>
            <person name="Bakalarski C.E."/>
            <person name="Elledge S.J."/>
            <person name="Gygi S.P."/>
        </authorList>
    </citation>
    <scope>PHOSPHORYLATION [LARGE SCALE ANALYSIS] AT SER-356; SER-486; THR-490 AND SER-496</scope>
    <scope>IDENTIFICATION BY MASS SPECTROMETRY [LARGE SCALE ANALYSIS]</scope>
    <source>
        <tissue>Cervix carcinoma</tissue>
    </source>
</reference>
<reference key="30">
    <citation type="journal article" date="2009" name="Mol. Cell. Proteomics">
        <title>Large-scale proteomics analysis of the human kinome.</title>
        <authorList>
            <person name="Oppermann F.S."/>
            <person name="Gnad F."/>
            <person name="Olsen J.V."/>
            <person name="Hornberger R."/>
            <person name="Greff Z."/>
            <person name="Keri G."/>
            <person name="Mann M."/>
            <person name="Daub H."/>
        </authorList>
    </citation>
    <scope>PHOSPHORYLATION [LARGE SCALE ANALYSIS] AT THR-32 AND SER-467</scope>
    <scope>IDENTIFICATION BY MASS SPECTROMETRY [LARGE SCALE ANALYSIS]</scope>
</reference>
<reference key="31">
    <citation type="journal article" date="2009" name="Sci. Signal.">
        <title>Quantitative phosphoproteomic analysis of T cell receptor signaling reveals system-wide modulation of protein-protein interactions.</title>
        <authorList>
            <person name="Mayya V."/>
            <person name="Lundgren D.H."/>
            <person name="Hwang S.-I."/>
            <person name="Rezaul K."/>
            <person name="Wu L."/>
            <person name="Eng J.K."/>
            <person name="Rodionov V."/>
            <person name="Han D.K."/>
        </authorList>
    </citation>
    <scope>PHOSPHORYLATION [LARGE SCALE ANALYSIS] AT THR-382</scope>
    <scope>IDENTIFICATION BY MASS SPECTROMETRY [LARGE SCALE ANALYSIS]</scope>
    <source>
        <tissue>Leukemic T-cell</tissue>
    </source>
</reference>
<reference key="32">
    <citation type="journal article" date="2010" name="Biochem. Soc. Trans.">
        <title>Cell-wide analysis of secretory granule dynamics in three dimensions in living pancreatic beta-cells: evidence against a role for AMPK-dependent phosphorylation of KLC1 at Ser517/Ser520 in glucose-stimulated insulin granule movement.</title>
        <authorList>
            <person name="McDonald A."/>
            <person name="Fogarty S."/>
            <person name="Leclerc I."/>
            <person name="Hill E.V."/>
            <person name="Hardie D.G."/>
            <person name="Rutter G.A."/>
        </authorList>
    </citation>
    <scope>FUNCTION IN PHOSPHORYLATION OF KLC1</scope>
</reference>
<reference key="33">
    <citation type="journal article" date="2010" name="Proc. Natl. Acad. Sci. U.S.A.">
        <title>ATM signals to TSC2 in the cytoplasm to regulate mTORC1 in response to ROS.</title>
        <authorList>
            <person name="Alexander A."/>
            <person name="Cai S.L."/>
            <person name="Kim J."/>
            <person name="Nanez A."/>
            <person name="Sahin M."/>
            <person name="MacLean K.H."/>
            <person name="Inoki K."/>
            <person name="Guan K.L."/>
            <person name="Shen J."/>
            <person name="Person M.D."/>
            <person name="Kusewitt D."/>
            <person name="Mills G.B."/>
            <person name="Kastan M.B."/>
            <person name="Walker C.L."/>
        </authorList>
    </citation>
    <scope>FUNCTION</scope>
</reference>
<reference key="34">
    <citation type="journal article" date="2010" name="Sci. Signal.">
        <title>Quantitative phosphoproteomics reveals widespread full phosphorylation site occupancy during mitosis.</title>
        <authorList>
            <person name="Olsen J.V."/>
            <person name="Vermeulen M."/>
            <person name="Santamaria A."/>
            <person name="Kumar C."/>
            <person name="Miller M.L."/>
            <person name="Jensen L.J."/>
            <person name="Gnad F."/>
            <person name="Cox J."/>
            <person name="Jensen T.S."/>
            <person name="Nigg E.A."/>
            <person name="Brunak S."/>
            <person name="Mann M."/>
        </authorList>
    </citation>
    <scope>IDENTIFICATION BY MASS SPECTROMETRY [LARGE SCALE ANALYSIS]</scope>
    <source>
        <tissue>Cervix carcinoma</tissue>
    </source>
</reference>
<reference key="35">
    <citation type="journal article" date="2011" name="Autophagy">
        <title>Ulk1-mediated phosphorylation of AMPK constitutes a negative regulatory feedback loop.</title>
        <authorList>
            <person name="Loffler A.S."/>
            <person name="Alers S."/>
            <person name="Dieterle A.M."/>
            <person name="Keppeler H."/>
            <person name="Franz-Wachtel M."/>
            <person name="Kundu M."/>
            <person name="Campbell D.G."/>
            <person name="Wesselborg S."/>
            <person name="Alessi D.R."/>
            <person name="Stork B."/>
        </authorList>
    </citation>
    <scope>PHOSPHORYLATION BY ULK1 AND ULK2</scope>
</reference>
<reference key="36">
    <citation type="journal article" date="2011" name="BMC Syst. Biol.">
        <title>Initial characterization of the human central proteome.</title>
        <authorList>
            <person name="Burkard T.R."/>
            <person name="Planyavsky M."/>
            <person name="Kaupe I."/>
            <person name="Breitwieser F.P."/>
            <person name="Buerckstuemmer T."/>
            <person name="Bennett K.L."/>
            <person name="Superti-Furga G."/>
            <person name="Colinge J."/>
        </authorList>
    </citation>
    <scope>IDENTIFICATION BY MASS SPECTROMETRY [LARGE SCALE ANALYSIS]</scope>
</reference>
<reference key="37">
    <citation type="journal article" date="2011" name="Science">
        <title>Phosphorylation of ULK1 (hATG1) by AMP-activated protein kinase connects energy sensing to mitophagy.</title>
        <authorList>
            <person name="Egan D.F."/>
            <person name="Shackelford D.B."/>
            <person name="Mihaylova M.M."/>
            <person name="Gelino S."/>
            <person name="Kohnz R.A."/>
            <person name="Mair W."/>
            <person name="Vasquez D.S."/>
            <person name="Joshi A."/>
            <person name="Gwinn D.M."/>
            <person name="Taylor R."/>
            <person name="Asara J.M."/>
            <person name="Fitzpatrick J."/>
            <person name="Dillin A."/>
            <person name="Viollet B."/>
            <person name="Kundu M."/>
            <person name="Hansen M."/>
            <person name="Shaw R.J."/>
        </authorList>
    </citation>
    <scope>FUNCTION IN PHOSPHORYLATION OF ULK1</scope>
</reference>
<reference key="38">
    <citation type="journal article" date="2011" name="Science">
        <title>AMPK is a direct adenylate charge-regulated protein kinase.</title>
        <authorList>
            <person name="Oakhill J.S."/>
            <person name="Steel R."/>
            <person name="Chen Z.P."/>
            <person name="Scott J.W."/>
            <person name="Ling N."/>
            <person name="Tam S."/>
            <person name="Kemp B.E."/>
        </authorList>
    </citation>
    <scope>INTERACTION WITH PRKAB1 AND PRKAG1</scope>
    <scope>ACTIVITY REGULATION</scope>
</reference>
<reference key="39">
    <citation type="journal article" date="2007" name="Circ. Res.">
        <title>AMP-activated protein kinase in metabolic control and insulin signaling.</title>
        <authorList>
            <person name="Towler M.C."/>
            <person name="Hardie D.G."/>
        </authorList>
    </citation>
    <scope>REVIEW ON FUNCTION</scope>
</reference>
<reference key="40">
    <citation type="journal article" date="2007" name="Nat. Rev. Mol. Cell Biol.">
        <title>AMP-activated/SNF1 protein kinases: conserved guardians of cellular energy.</title>
        <authorList>
            <person name="Hardie D.G."/>
        </authorList>
    </citation>
    <scope>REVIEW ON FUNCTION</scope>
</reference>
<reference key="41">
    <citation type="journal article" date="2013" name="Biochem. J.">
        <title>N-Myristoylation is essential for protein phosphatases PPM1A and PPM1B to dephosphorylate their physiological substrates in cells.</title>
        <authorList>
            <person name="Chida T."/>
            <person name="Ando M."/>
            <person name="Matsuki T."/>
            <person name="Masu Y."/>
            <person name="Nagaura Y."/>
            <person name="Takano-Yamamoto T."/>
            <person name="Tamura S."/>
            <person name="Kobayashi T."/>
        </authorList>
    </citation>
    <scope>DEPHOSPHORYLATION</scope>
</reference>
<reference key="42">
    <citation type="journal article" date="2013" name="J. Proteome Res.">
        <title>Toward a comprehensive characterization of a human cancer cell phosphoproteome.</title>
        <authorList>
            <person name="Zhou H."/>
            <person name="Di Palma S."/>
            <person name="Preisinger C."/>
            <person name="Peng M."/>
            <person name="Polat A.N."/>
            <person name="Heck A.J."/>
            <person name="Mohammed S."/>
        </authorList>
    </citation>
    <scope>PHOSPHORYLATION [LARGE SCALE ANALYSIS] AT THR-32; THR-382; SER-486; THR-490 AND SER-496</scope>
    <scope>IDENTIFICATION BY MASS SPECTROMETRY [LARGE SCALE ANALYSIS]</scope>
    <source>
        <tissue>Cervix carcinoma</tissue>
        <tissue>Erythroleukemia</tissue>
    </source>
</reference>
<reference key="43">
    <citation type="journal article" date="2014" name="J. Biol. Chem.">
        <title>Cross-talk between two essential nutrient-sensitive enzymes: O-GlcNAc transferase (OGT) and AMP-activated protein kinase (AMPK).</title>
        <authorList>
            <person name="Bullen J.W."/>
            <person name="Balsbaugh J.L."/>
            <person name="Chanda D."/>
            <person name="Shabanowitz J."/>
            <person name="Hunt D.F."/>
            <person name="Neumann D."/>
            <person name="Hart G.W."/>
        </authorList>
    </citation>
    <scope>FUNCTION</scope>
    <scope>CATALYTIC ACTIVITY</scope>
    <scope>GLYCOSYLATION</scope>
</reference>
<reference key="44">
    <citation type="journal article" date="2014" name="J. Proteomics">
        <title>An enzyme assisted RP-RPLC approach for in-depth analysis of human liver phosphoproteome.</title>
        <authorList>
            <person name="Bian Y."/>
            <person name="Song C."/>
            <person name="Cheng K."/>
            <person name="Dong M."/>
            <person name="Wang F."/>
            <person name="Huang J."/>
            <person name="Sun D."/>
            <person name="Wang L."/>
            <person name="Ye M."/>
            <person name="Zou H."/>
        </authorList>
    </citation>
    <scope>PHOSPHORYLATION [LARGE SCALE ANALYSIS] AT THR-355; SER-496; SER-508; SER-524 AND SER-527</scope>
    <scope>IDENTIFICATION BY MASS SPECTROMETRY [LARGE SCALE ANALYSIS]</scope>
    <source>
        <tissue>Liver</tissue>
    </source>
</reference>
<reference key="45">
    <citation type="journal article" date="2017" name="Nat. Commun.">
        <title>WIPI3 and WIPI4 beta-propellers are scaffolds for LKB1-AMPK-TSC signalling circuits in the control of autophagy.</title>
        <authorList>
            <person name="Bakula D."/>
            <person name="Mueller A.J."/>
            <person name="Zuleger T."/>
            <person name="Takacs Z."/>
            <person name="Franz-Wachtel M."/>
            <person name="Thost A.K."/>
            <person name="Brigger D."/>
            <person name="Tschan M.P."/>
            <person name="Frickey T."/>
            <person name="Robenek H."/>
            <person name="Macek B."/>
            <person name="Proikas-Cezanne T."/>
        </authorList>
    </citation>
    <scope>FUNCTION</scope>
</reference>
<reference key="46">
    <citation type="journal article" date="2020" name="Science">
        <title>An AMPK-caspase-6 axis controls liver damage in nonalcoholic steatohepatitis.</title>
        <authorList>
            <person name="Zhao P."/>
            <person name="Sun X."/>
            <person name="Chaggan C."/>
            <person name="Liao Z."/>
            <person name="In Wong K."/>
            <person name="He F."/>
            <person name="Singh S."/>
            <person name="Loomba R."/>
            <person name="Karin M."/>
            <person name="Witztum J.L."/>
            <person name="Saltiel A.R."/>
        </authorList>
    </citation>
    <scope>FUNCTION</scope>
    <scope>CATALYTIC ACTIVITY</scope>
</reference>
<reference key="47">
    <citation type="journal article" date="2021" name="Mol. Cell">
        <title>Choline kinase alpha 2 acts as a protein kinase to promote lipolysis of lipid droplets.</title>
        <authorList>
            <person name="Liu R."/>
            <person name="Lee J.H."/>
            <person name="Li J."/>
            <person name="Yu R."/>
            <person name="Tan L."/>
            <person name="Xia Y."/>
            <person name="Zheng Y."/>
            <person name="Bian X.L."/>
            <person name="Lorenzi P.L."/>
            <person name="Chen Q."/>
            <person name="Lu Z."/>
        </authorList>
    </citation>
    <scope>FUNCTION</scope>
</reference>
<reference key="48">
    <citation type="journal article" date="2022" name="Sci. Adv.">
        <title>AMPK-dependent phosphorylation of MTFR1L regulates mitochondrial morphology.</title>
        <authorList>
            <person name="Tilokani L."/>
            <person name="Russell F.M."/>
            <person name="Hamilton S."/>
            <person name="Virga D.M."/>
            <person name="Segawa M."/>
            <person name="Paupe V."/>
            <person name="Gruszczyk A.V."/>
            <person name="Protasoni M."/>
            <person name="Tabara L.C."/>
            <person name="Johnson M."/>
            <person name="Anand H."/>
            <person name="Murphy M.P."/>
            <person name="Hardie D.G."/>
            <person name="Polleux F."/>
            <person name="Prudent J."/>
        </authorList>
    </citation>
    <scope>FUNCTION</scope>
</reference>
<reference key="49">
    <citation type="journal article" date="2023" name="Nat. Metab.">
        <title>AMPK-dependent phosphorylation of the GATOR2 component WDR24 suppresses glucose-mediated mTORC1 activation.</title>
        <authorList>
            <person name="Dai X."/>
            <person name="Jiang C."/>
            <person name="Jiang Q."/>
            <person name="Fang L."/>
            <person name="Yu H."/>
            <person name="Guo J."/>
            <person name="Yan P."/>
            <person name="Chi F."/>
            <person name="Zhang T."/>
            <person name="Inuzuka H."/>
            <person name="Asara J.M."/>
            <person name="Wang P."/>
            <person name="Guo J."/>
            <person name="Wei W."/>
        </authorList>
    </citation>
    <scope>FUNCTION</scope>
    <scope>CATALYTIC ACTIVITY</scope>
</reference>
<reference key="50">
    <citation type="journal article" date="2023" name="Science">
        <title>Induction of lysosomal and mitochondrial biogenesis by AMPK phosphorylation of FNIP1.</title>
        <authorList>
            <person name="Malik N."/>
            <person name="Ferreira B.I."/>
            <person name="Hollstein P.E."/>
            <person name="Curtis S.D."/>
            <person name="Trefts E."/>
            <person name="Weiser Novak S."/>
            <person name="Yu J."/>
            <person name="Gilson R."/>
            <person name="Hellberg K."/>
            <person name="Fang L."/>
            <person name="Sheridan A."/>
            <person name="Hah N."/>
            <person name="Shadel G.S."/>
            <person name="Manor U."/>
            <person name="Shaw R.J."/>
        </authorList>
    </citation>
    <scope>FUNCTION</scope>
    <scope>CATALYTIC ACTIVITY</scope>
</reference>
<reference key="51">
    <citation type="journal article" date="2023" name="Virol. J.">
        <title>DENV-2 NS1 promotes AMPK-LKB1 interaction to activate AMPK/ERK/mTOR signaling pathway to induce autophagy.</title>
        <authorList>
            <person name="Wu N."/>
            <person name="Ji J."/>
            <person name="Gou X."/>
            <person name="Hu P."/>
            <person name="Cheng Y."/>
            <person name="Liu Y."/>
            <person name="Wang Y."/>
            <person name="Zhang Q."/>
            <person name="Zuo L."/>
        </authorList>
    </citation>
    <scope>FUNCTION</scope>
    <scope>INTERACTION WITH DENGUE VIRUS TYPE 2 NON-STRUCTURAL PROTEIN 1 (MICROBIAL INFECTION)</scope>
    <scope>SUBCELLULAR LOCATION</scope>
</reference>
<reference key="52">
    <citation type="journal article" date="2006" name="Science">
        <title>The consensus coding sequences of human breast and colorectal cancers.</title>
        <authorList>
            <person name="Sjoeblom T."/>
            <person name="Jones S."/>
            <person name="Wood L.D."/>
            <person name="Parsons D.W."/>
            <person name="Lin J."/>
            <person name="Barber T.D."/>
            <person name="Mandelker D."/>
            <person name="Leary R.J."/>
            <person name="Ptak J."/>
            <person name="Silliman N."/>
            <person name="Szabo S."/>
            <person name="Buckhaults P."/>
            <person name="Farrell C."/>
            <person name="Meeh P."/>
            <person name="Markowitz S.D."/>
            <person name="Willis J."/>
            <person name="Dawson D."/>
            <person name="Willson J.K.V."/>
            <person name="Gazdar A.F."/>
            <person name="Hartigan J."/>
            <person name="Wu L."/>
            <person name="Liu C."/>
            <person name="Parmigiani G."/>
            <person name="Park B.H."/>
            <person name="Bachman K.E."/>
            <person name="Papadopoulos N."/>
            <person name="Vogelstein B."/>
            <person name="Kinzler K.W."/>
            <person name="Velculescu V.E."/>
        </authorList>
    </citation>
    <scope>VARIANT [LARGE SCALE ANALYSIS] ARG-16</scope>
</reference>
<feature type="chain" id="PRO_0000085589" description="5'-AMP-activated protein kinase catalytic subunit alpha-1">
    <location>
        <begin position="1"/>
        <end position="559"/>
    </location>
</feature>
<feature type="domain" description="Protein kinase" evidence="3">
    <location>
        <begin position="27"/>
        <end position="279"/>
    </location>
</feature>
<feature type="region of interest" description="AIS">
    <location>
        <begin position="302"/>
        <end position="381"/>
    </location>
</feature>
<feature type="region of interest" description="Disordered" evidence="5">
    <location>
        <begin position="485"/>
        <end position="536"/>
    </location>
</feature>
<feature type="compositionally biased region" description="Polar residues" evidence="5">
    <location>
        <begin position="485"/>
        <end position="505"/>
    </location>
</feature>
<feature type="compositionally biased region" description="Low complexity" evidence="5">
    <location>
        <begin position="516"/>
        <end position="535"/>
    </location>
</feature>
<feature type="active site" description="Proton acceptor" evidence="3 4">
    <location>
        <position position="150"/>
    </location>
</feature>
<feature type="binding site" evidence="3">
    <location>
        <begin position="33"/>
        <end position="41"/>
    </location>
    <ligand>
        <name>ATP</name>
        <dbReference type="ChEBI" id="CHEBI:30616"/>
    </ligand>
</feature>
<feature type="binding site" evidence="3">
    <location>
        <position position="56"/>
    </location>
    <ligand>
        <name>ATP</name>
        <dbReference type="ChEBI" id="CHEBI:30616"/>
    </ligand>
</feature>
<feature type="modified residue" description="Phosphothreonine" evidence="46 48">
    <location>
        <position position="32"/>
    </location>
</feature>
<feature type="modified residue" description="Phosphothreonine; by LKB1 and CaMKK2" evidence="2">
    <location>
        <position position="183"/>
    </location>
</feature>
<feature type="modified residue" description="Phosphothreonine" evidence="1">
    <location>
        <position position="269"/>
    </location>
</feature>
<feature type="modified residue" description="Phosphothreonine" evidence="49">
    <location>
        <position position="355"/>
    </location>
</feature>
<feature type="modified residue" description="Phosphoserine" evidence="45">
    <location>
        <position position="356"/>
    </location>
</feature>
<feature type="modified residue" description="Phosphoserine; by ULK1" evidence="1">
    <location>
        <position position="360"/>
    </location>
</feature>
<feature type="modified residue" description="Phosphothreonine; by ULK1" evidence="1">
    <location>
        <position position="368"/>
    </location>
</feature>
<feature type="modified residue" description="Phosphothreonine" evidence="44 47 48">
    <location>
        <position position="382"/>
    </location>
</feature>
<feature type="modified residue" description="Phosphoserine" evidence="1">
    <location>
        <position position="397"/>
    </location>
</feature>
<feature type="modified residue" description="Phosphoserine" evidence="46">
    <location>
        <position position="467"/>
    </location>
</feature>
<feature type="modified residue" description="Phosphoserine" evidence="45 48">
    <location>
        <position position="486"/>
    </location>
</feature>
<feature type="modified residue" description="Phosphothreonine" evidence="1">
    <location>
        <position position="488"/>
    </location>
</feature>
<feature type="modified residue" description="Phosphothreonine" evidence="45 48">
    <location>
        <position position="490"/>
    </location>
</feature>
<feature type="modified residue" description="Phosphoserine" evidence="45 48 49">
    <location>
        <position position="496"/>
    </location>
</feature>
<feature type="modified residue" description="Phosphoserine" evidence="49">
    <location>
        <position position="508"/>
    </location>
</feature>
<feature type="modified residue" description="Phosphoserine" evidence="49">
    <location>
        <position position="524"/>
    </location>
</feature>
<feature type="modified residue" description="Phosphoserine" evidence="49">
    <location>
        <position position="527"/>
    </location>
</feature>
<feature type="splice variant" id="VSP_035431" description="In isoform 2." evidence="39">
    <original>R</original>
    <variation>RKSDVPGVVKTGSTKE</variation>
    <location>
        <position position="121"/>
    </location>
</feature>
<feature type="sequence variant" id="VAR_058401" description="In dbSNP:rs17855679." evidence="12">
    <original>M</original>
    <variation>L</variation>
    <location>
        <position position="10"/>
    </location>
</feature>
<feature type="sequence variant" id="VAR_035622" description="In a breast cancer sample; somatic mutation; dbSNP:rs928784854." evidence="16">
    <original>Q</original>
    <variation>R</variation>
    <location>
        <position position="16"/>
    </location>
</feature>
<feature type="mutagenesis site" description="Activates the kinase activity." evidence="18">
    <original>V</original>
    <variation>G</variation>
    <variation>Q</variation>
    <location>
        <position position="307"/>
    </location>
</feature>
<feature type="sequence conflict" description="In Ref. 4; BAG35788." evidence="42" ref="4">
    <original>S</original>
    <variation>C</variation>
    <location>
        <position position="5"/>
    </location>
</feature>
<feature type="sequence conflict" description="In Ref. 5; AAD43027." evidence="42" ref="5">
    <original>K</original>
    <variation>S</variation>
    <location>
        <position position="9"/>
    </location>
</feature>
<feature type="sequence conflict" description="In Ref. 6; AAA64850." evidence="42" ref="6">
    <original>T</original>
    <variation>A</variation>
    <location>
        <position position="37"/>
    </location>
</feature>
<feature type="sequence conflict" description="In Ref. 6; AAA64850." evidence="42" ref="6">
    <original>A</original>
    <variation>V</variation>
    <location>
        <position position="202"/>
    </location>
</feature>
<feature type="sequence conflict" description="In Ref. 6; AAA64850." evidence="42" ref="6">
    <original>I</original>
    <variation>L</variation>
    <location>
        <position position="208"/>
    </location>
</feature>
<feature type="sequence conflict" description="In Ref. 3; BAA36547." evidence="42" ref="3">
    <original>T</original>
    <variation>S</variation>
    <location>
        <position position="269"/>
    </location>
</feature>
<feature type="strand" evidence="52">
    <location>
        <begin position="27"/>
        <end position="34"/>
    </location>
</feature>
<feature type="strand" evidence="51">
    <location>
        <begin position="37"/>
        <end position="39"/>
    </location>
</feature>
<feature type="strand" evidence="52">
    <location>
        <begin position="41"/>
        <end position="46"/>
    </location>
</feature>
<feature type="turn" evidence="52">
    <location>
        <begin position="47"/>
        <end position="49"/>
    </location>
</feature>
<feature type="strand" evidence="52">
    <location>
        <begin position="52"/>
        <end position="59"/>
    </location>
</feature>
<feature type="helix" evidence="52">
    <location>
        <begin position="60"/>
        <end position="65"/>
    </location>
</feature>
<feature type="helix" evidence="52">
    <location>
        <begin position="69"/>
        <end position="81"/>
    </location>
</feature>
<feature type="strand" evidence="52">
    <location>
        <begin position="90"/>
        <end position="95"/>
    </location>
</feature>
<feature type="strand" evidence="52">
    <location>
        <begin position="97"/>
        <end position="105"/>
    </location>
</feature>
<feature type="strand" evidence="53">
    <location>
        <begin position="108"/>
        <end position="111"/>
    </location>
</feature>
<feature type="helix" evidence="52">
    <location>
        <begin position="112"/>
        <end position="119"/>
    </location>
</feature>
<feature type="helix" evidence="52">
    <location>
        <begin position="124"/>
        <end position="143"/>
    </location>
</feature>
<feature type="turn" evidence="52">
    <location>
        <begin position="153"/>
        <end position="155"/>
    </location>
</feature>
<feature type="strand" evidence="52">
    <location>
        <begin position="156"/>
        <end position="158"/>
    </location>
</feature>
<feature type="strand" evidence="52">
    <location>
        <begin position="164"/>
        <end position="166"/>
    </location>
</feature>
<feature type="helix" evidence="52">
    <location>
        <begin position="169"/>
        <end position="171"/>
    </location>
</feature>
<feature type="helix" evidence="54">
    <location>
        <begin position="173"/>
        <end position="178"/>
    </location>
</feature>
<feature type="helix" evidence="54">
    <location>
        <begin position="180"/>
        <end position="186"/>
    </location>
</feature>
<feature type="turn" evidence="52">
    <location>
        <begin position="188"/>
        <end position="190"/>
    </location>
</feature>
<feature type="helix" evidence="52">
    <location>
        <begin position="193"/>
        <end position="196"/>
    </location>
</feature>
<feature type="helix" evidence="52">
    <location>
        <begin position="204"/>
        <end position="220"/>
    </location>
</feature>
<feature type="strand" evidence="50">
    <location>
        <begin position="227"/>
        <end position="229"/>
    </location>
</feature>
<feature type="helix" evidence="52">
    <location>
        <begin position="230"/>
        <end position="239"/>
    </location>
</feature>
<feature type="strand" evidence="54">
    <location>
        <begin position="246"/>
        <end position="248"/>
    </location>
</feature>
<feature type="helix" evidence="52">
    <location>
        <begin position="250"/>
        <end position="259"/>
    </location>
</feature>
<feature type="turn" evidence="52">
    <location>
        <begin position="264"/>
        <end position="266"/>
    </location>
</feature>
<feature type="helix" evidence="52">
    <location>
        <begin position="270"/>
        <end position="275"/>
    </location>
</feature>
<feature type="helix" evidence="52">
    <location>
        <begin position="277"/>
        <end position="280"/>
    </location>
</feature>
<feature type="helix" evidence="51">
    <location>
        <begin position="285"/>
        <end position="287"/>
    </location>
</feature>
<feature type="helix" evidence="52">
    <location>
        <begin position="298"/>
        <end position="305"/>
    </location>
</feature>
<feature type="turn" evidence="52">
    <location>
        <begin position="323"/>
        <end position="325"/>
    </location>
</feature>
<feature type="helix" evidence="52">
    <location>
        <begin position="330"/>
        <end position="345"/>
    </location>
</feature>
<feature type="helix" evidence="52">
    <location>
        <begin position="349"/>
        <end position="351"/>
    </location>
</feature>
<feature type="turn" evidence="52">
    <location>
        <begin position="372"/>
        <end position="374"/>
    </location>
</feature>
<feature type="helix" evidence="53">
    <location>
        <begin position="375"/>
        <end position="379"/>
    </location>
</feature>
<feature type="strand" evidence="52">
    <location>
        <begin position="408"/>
        <end position="413"/>
    </location>
</feature>
<feature type="helix" evidence="52">
    <location>
        <begin position="417"/>
        <end position="430"/>
    </location>
</feature>
<feature type="strand" evidence="52">
    <location>
        <begin position="434"/>
        <end position="439"/>
    </location>
</feature>
<feature type="strand" evidence="52">
    <location>
        <begin position="442"/>
        <end position="448"/>
    </location>
</feature>
<feature type="turn" evidence="52">
    <location>
        <begin position="450"/>
        <end position="452"/>
    </location>
</feature>
<feature type="strand" evidence="52">
    <location>
        <begin position="455"/>
        <end position="464"/>
    </location>
</feature>
<feature type="strand" evidence="52">
    <location>
        <begin position="466"/>
        <end position="468"/>
    </location>
</feature>
<feature type="strand" evidence="52">
    <location>
        <begin position="470"/>
        <end position="476"/>
    </location>
</feature>
<feature type="helix" evidence="52">
    <location>
        <begin position="542"/>
        <end position="557"/>
    </location>
</feature>
<protein>
    <recommendedName>
        <fullName>5'-AMP-activated protein kinase catalytic subunit alpha-1</fullName>
        <shortName>AMPK subunit alpha-1</shortName>
        <ecNumber evidence="32 35 36">2.7.11.1</ecNumber>
    </recommendedName>
    <alternativeName>
        <fullName>Acetyl-CoA carboxylase kinase</fullName>
        <shortName>ACACA kinase</shortName>
    </alternativeName>
    <alternativeName>
        <fullName>Hydroxymethylglutaryl-CoA reductase kinase</fullName>
        <shortName>HMGCR kinase</shortName>
        <ecNumber evidence="1">2.7.11.31</ecNumber>
    </alternativeName>
    <alternativeName>
        <fullName>Tau-protein kinase PRKAA1</fullName>
        <ecNumber evidence="1">2.7.11.26</ecNumber>
    </alternativeName>
</protein>
<dbReference type="EC" id="2.7.11.1" evidence="32 35 36"/>
<dbReference type="EC" id="2.7.11.31" evidence="1"/>
<dbReference type="EC" id="2.7.11.26" evidence="1"/>
<dbReference type="EMBL" id="AC008810">
    <property type="status" value="NOT_ANNOTATED_CDS"/>
    <property type="molecule type" value="Genomic_DNA"/>
</dbReference>
<dbReference type="EMBL" id="BC048980">
    <property type="protein sequence ID" value="AAH48980.1"/>
    <property type="molecule type" value="mRNA"/>
</dbReference>
<dbReference type="EMBL" id="AB022017">
    <property type="protein sequence ID" value="BAA36547.1"/>
    <property type="status" value="ALT_INIT"/>
    <property type="molecule type" value="mRNA"/>
</dbReference>
<dbReference type="EMBL" id="AK312947">
    <property type="protein sequence ID" value="BAG35788.1"/>
    <property type="status" value="ALT_INIT"/>
    <property type="molecule type" value="mRNA"/>
</dbReference>
<dbReference type="EMBL" id="BC037303">
    <property type="protein sequence ID" value="AAH37303.1"/>
    <property type="status" value="ALT_INIT"/>
    <property type="molecule type" value="mRNA"/>
</dbReference>
<dbReference type="EMBL" id="AF100763">
    <property type="protein sequence ID" value="AAD43027.1"/>
    <property type="status" value="ALT_INIT"/>
    <property type="molecule type" value="mRNA"/>
</dbReference>
<dbReference type="EMBL" id="U22456">
    <property type="protein sequence ID" value="AAA64850.1"/>
    <property type="status" value="ALT_INIT"/>
    <property type="molecule type" value="mRNA"/>
</dbReference>
<dbReference type="EMBL" id="Y12856">
    <property type="protein sequence ID" value="CAA73361.1"/>
    <property type="molecule type" value="mRNA"/>
</dbReference>
<dbReference type="CCDS" id="CCDS3932.2">
    <molecule id="Q13131-1"/>
</dbReference>
<dbReference type="CCDS" id="CCDS3933.2">
    <molecule id="Q13131-2"/>
</dbReference>
<dbReference type="PIR" id="G01743">
    <property type="entry name" value="G01743"/>
</dbReference>
<dbReference type="RefSeq" id="NP_006242.5">
    <molecule id="Q13131-1"/>
    <property type="nucleotide sequence ID" value="NM_006251.5"/>
</dbReference>
<dbReference type="RefSeq" id="NP_996790.3">
    <molecule id="Q13131-2"/>
    <property type="nucleotide sequence ID" value="NM_206907.3"/>
</dbReference>
<dbReference type="PDB" id="4RED">
    <property type="method" value="X-ray"/>
    <property type="resolution" value="2.95 A"/>
    <property type="chains" value="A/B=22-362"/>
</dbReference>
<dbReference type="PDB" id="4RER">
    <property type="method" value="X-ray"/>
    <property type="resolution" value="4.05 A"/>
    <property type="chains" value="A=20-559"/>
</dbReference>
<dbReference type="PDB" id="4REW">
    <property type="method" value="X-ray"/>
    <property type="resolution" value="4.58 A"/>
    <property type="chains" value="A=20-559"/>
</dbReference>
<dbReference type="PDB" id="5EZV">
    <property type="method" value="X-ray"/>
    <property type="resolution" value="2.99 A"/>
    <property type="chains" value="A/C=359-401"/>
</dbReference>
<dbReference type="PDB" id="6C9F">
    <property type="method" value="X-ray"/>
    <property type="resolution" value="2.92 A"/>
    <property type="chains" value="A=22-559"/>
</dbReference>
<dbReference type="PDB" id="6C9G">
    <property type="method" value="X-ray"/>
    <property type="resolution" value="2.70 A"/>
    <property type="chains" value="A=22-559"/>
</dbReference>
<dbReference type="PDB" id="6C9H">
    <property type="method" value="X-ray"/>
    <property type="resolution" value="2.65 A"/>
    <property type="chains" value="A=22-559"/>
</dbReference>
<dbReference type="PDB" id="6C9J">
    <property type="method" value="X-ray"/>
    <property type="resolution" value="3.05 A"/>
    <property type="chains" value="A=22-559"/>
</dbReference>
<dbReference type="PDB" id="7JHG">
    <property type="method" value="EM"/>
    <property type="resolution" value="3.47 A"/>
    <property type="chains" value="A=22-559"/>
</dbReference>
<dbReference type="PDB" id="7JHH">
    <property type="method" value="EM"/>
    <property type="resolution" value="3.92 A"/>
    <property type="chains" value="A=22-559"/>
</dbReference>
<dbReference type="PDB" id="7JIJ">
    <property type="method" value="X-ray"/>
    <property type="resolution" value="5.50 A"/>
    <property type="chains" value="A=22-559"/>
</dbReference>
<dbReference type="PDB" id="7M74">
    <property type="method" value="EM"/>
    <property type="resolution" value="3.93 A"/>
    <property type="chains" value="A=22-559"/>
</dbReference>
<dbReference type="PDBsum" id="4RED"/>
<dbReference type="PDBsum" id="4RER"/>
<dbReference type="PDBsum" id="4REW"/>
<dbReference type="PDBsum" id="5EZV"/>
<dbReference type="PDBsum" id="6C9F"/>
<dbReference type="PDBsum" id="6C9G"/>
<dbReference type="PDBsum" id="6C9H"/>
<dbReference type="PDBsum" id="6C9J"/>
<dbReference type="PDBsum" id="7JHG"/>
<dbReference type="PDBsum" id="7JHH"/>
<dbReference type="PDBsum" id="7JIJ"/>
<dbReference type="PDBsum" id="7M74"/>
<dbReference type="EMDB" id="EMD-22336"/>
<dbReference type="EMDB" id="EMD-22337"/>
<dbReference type="EMDB" id="EMD-23708"/>
<dbReference type="SMR" id="Q13131"/>
<dbReference type="BioGRID" id="111549">
    <property type="interactions" value="299"/>
</dbReference>
<dbReference type="ComplexPortal" id="CPX-5633">
    <property type="entry name" value="AMPK complex, alpha1-beta1-gamma1 variant"/>
</dbReference>
<dbReference type="ComplexPortal" id="CPX-5786">
    <property type="entry name" value="AMPK complex, alpha1-beta1-gamma2 variant"/>
</dbReference>
<dbReference type="ComplexPortal" id="CPX-5791">
    <property type="entry name" value="AMPK complex, alpha1-beta2-gamma1 variant"/>
</dbReference>
<dbReference type="ComplexPortal" id="CPX-5841">
    <property type="entry name" value="AMPK complex, alpha1-beta2-gamma3 variant"/>
</dbReference>
<dbReference type="ComplexPortal" id="CPX-5842">
    <property type="entry name" value="AMPK complex, alpha1-beta1-gamma3 variant"/>
</dbReference>
<dbReference type="ComplexPortal" id="CPX-5846">
    <property type="entry name" value="AMPK complex, alpha1-beta2-gamma2 variant"/>
</dbReference>
<dbReference type="CORUM" id="Q13131"/>
<dbReference type="DIP" id="DIP-39973N"/>
<dbReference type="FunCoup" id="Q13131">
    <property type="interactions" value="4214"/>
</dbReference>
<dbReference type="IntAct" id="Q13131">
    <property type="interactions" value="151"/>
</dbReference>
<dbReference type="MINT" id="Q13131"/>
<dbReference type="STRING" id="9606.ENSP00000346148"/>
<dbReference type="BindingDB" id="Q13131"/>
<dbReference type="ChEMBL" id="CHEMBL4045"/>
<dbReference type="DrugBank" id="DB08039">
    <property type="generic name" value="(3Z)-N,N-DIMETHYL-2-OXO-3-(4,5,6,7-TETRAHYDRO-1H-INDOL-2-YLMETHYLIDENE)-2,3-DIHYDRO-1H-INDOLE-5-SULFONAMIDE"/>
</dbReference>
<dbReference type="DrugBank" id="DB04944">
    <property type="generic name" value="Acadesine"/>
</dbReference>
<dbReference type="DrugBank" id="DB00945">
    <property type="generic name" value="Acetylsalicylic acid"/>
</dbReference>
<dbReference type="DrugBank" id="DB00131">
    <property type="generic name" value="Adenosine phosphate"/>
</dbReference>
<dbReference type="DrugBank" id="DB00171">
    <property type="generic name" value="ATP"/>
</dbReference>
<dbReference type="DrugBank" id="DB08597">
    <property type="generic name" value="Dorsomorphin"/>
</dbReference>
<dbReference type="DrugBank" id="DB12010">
    <property type="generic name" value="Fostamatinib"/>
</dbReference>
<dbReference type="DrugBank" id="DB12509">
    <property type="generic name" value="Imeglimin"/>
</dbReference>
<dbReference type="DrugBank" id="DB00914">
    <property type="generic name" value="Phenformin"/>
</dbReference>
<dbReference type="DrugBank" id="DB04462">
    <property type="generic name" value="Tetrabromo-2-Benzotriazole"/>
</dbReference>
<dbReference type="DrugBank" id="DB00273">
    <property type="generic name" value="Topiramate"/>
</dbReference>
<dbReference type="DrugCentral" id="Q13131"/>
<dbReference type="GlyGen" id="Q13131">
    <property type="glycosylation" value="1 site, 1 O-linked glycan (1 site)"/>
</dbReference>
<dbReference type="iPTMnet" id="Q13131"/>
<dbReference type="PhosphoSitePlus" id="Q13131"/>
<dbReference type="SwissPalm" id="Q13131"/>
<dbReference type="BioMuta" id="PRKAA1"/>
<dbReference type="DMDM" id="254763436"/>
<dbReference type="CPTAC" id="CPTAC-2827"/>
<dbReference type="CPTAC" id="CPTAC-2866"/>
<dbReference type="CPTAC" id="CPTAC-2867"/>
<dbReference type="jPOST" id="Q13131"/>
<dbReference type="MassIVE" id="Q13131"/>
<dbReference type="PaxDb" id="9606-ENSP00000346148"/>
<dbReference type="PeptideAtlas" id="Q13131"/>
<dbReference type="ProteomicsDB" id="59180">
    <molecule id="Q13131-1"/>
</dbReference>
<dbReference type="ProteomicsDB" id="59181">
    <molecule id="Q13131-2"/>
</dbReference>
<dbReference type="Pumba" id="Q13131"/>
<dbReference type="ABCD" id="Q13131">
    <property type="antibodies" value="1 sequenced antibody"/>
</dbReference>
<dbReference type="Antibodypedia" id="3564">
    <property type="antibodies" value="1444 antibodies from 46 providers"/>
</dbReference>
<dbReference type="DNASU" id="5562"/>
<dbReference type="Ensembl" id="ENST00000354209.7">
    <molecule id="Q13131-2"/>
    <property type="protein sequence ID" value="ENSP00000346148.3"/>
    <property type="gene ID" value="ENSG00000132356.12"/>
</dbReference>
<dbReference type="Ensembl" id="ENST00000397128.7">
    <molecule id="Q13131-1"/>
    <property type="protein sequence ID" value="ENSP00000380317.2"/>
    <property type="gene ID" value="ENSG00000132356.12"/>
</dbReference>
<dbReference type="GeneID" id="5562"/>
<dbReference type="KEGG" id="hsa:5562"/>
<dbReference type="MANE-Select" id="ENST00000397128.7">
    <property type="protein sequence ID" value="ENSP00000380317.2"/>
    <property type="RefSeq nucleotide sequence ID" value="NM_006251.6"/>
    <property type="RefSeq protein sequence ID" value="NP_006242.5"/>
</dbReference>
<dbReference type="UCSC" id="uc003jmb.4">
    <molecule id="Q13131-1"/>
    <property type="organism name" value="human"/>
</dbReference>
<dbReference type="AGR" id="HGNC:9376"/>
<dbReference type="CTD" id="5562"/>
<dbReference type="DisGeNET" id="5562"/>
<dbReference type="GeneCards" id="PRKAA1"/>
<dbReference type="HGNC" id="HGNC:9376">
    <property type="gene designation" value="PRKAA1"/>
</dbReference>
<dbReference type="HPA" id="ENSG00000132356">
    <property type="expression patterns" value="Low tissue specificity"/>
</dbReference>
<dbReference type="MalaCards" id="PRKAA1"/>
<dbReference type="MIM" id="602739">
    <property type="type" value="gene"/>
</dbReference>
<dbReference type="neXtProt" id="NX_Q13131"/>
<dbReference type="OpenTargets" id="ENSG00000132356"/>
<dbReference type="PharmGKB" id="PA33744"/>
<dbReference type="VEuPathDB" id="HostDB:ENSG00000132356"/>
<dbReference type="eggNOG" id="KOG0583">
    <property type="taxonomic scope" value="Eukaryota"/>
</dbReference>
<dbReference type="GeneTree" id="ENSGT00940000158865"/>
<dbReference type="HOGENOM" id="CLU_000288_59_3_1"/>
<dbReference type="InParanoid" id="Q13131"/>
<dbReference type="OMA" id="GSWLKMA"/>
<dbReference type="OrthoDB" id="193931at2759"/>
<dbReference type="PAN-GO" id="Q13131">
    <property type="GO annotations" value="4 GO annotations based on evolutionary models"/>
</dbReference>
<dbReference type="PhylomeDB" id="Q13131"/>
<dbReference type="TreeFam" id="TF314032"/>
<dbReference type="BRENDA" id="2.7.11.1">
    <property type="organism ID" value="2681"/>
</dbReference>
<dbReference type="BRENDA" id="2.7.11.31">
    <property type="organism ID" value="2681"/>
</dbReference>
<dbReference type="PathwayCommons" id="Q13131"/>
<dbReference type="Reactome" id="R-HSA-1632852">
    <property type="pathway name" value="Macroautophagy"/>
</dbReference>
<dbReference type="Reactome" id="R-HSA-380972">
    <property type="pathway name" value="Energy dependent regulation of mTOR by LKB1-AMPK"/>
</dbReference>
<dbReference type="Reactome" id="R-HSA-5628897">
    <property type="pathway name" value="TP53 Regulates Metabolic Genes"/>
</dbReference>
<dbReference type="Reactome" id="R-HSA-6804756">
    <property type="pathway name" value="Regulation of TP53 Activity through Phosphorylation"/>
</dbReference>
<dbReference type="Reactome" id="R-HSA-9619483">
    <property type="pathway name" value="Activation of AMPK downstream of NMDARs"/>
</dbReference>
<dbReference type="SignaLink" id="Q13131"/>
<dbReference type="SIGNOR" id="Q13131"/>
<dbReference type="BioGRID-ORCS" id="5562">
    <property type="hits" value="26 hits in 1193 CRISPR screens"/>
</dbReference>
<dbReference type="CD-CODE" id="8C2F96ED">
    <property type="entry name" value="Centrosome"/>
</dbReference>
<dbReference type="ChiTaRS" id="PRKAA1">
    <property type="organism name" value="human"/>
</dbReference>
<dbReference type="GeneWiki" id="Protein_kinase,_AMP-activated,_alpha_1"/>
<dbReference type="GenomeRNAi" id="5562"/>
<dbReference type="Pharos" id="Q13131">
    <property type="development level" value="Tclin"/>
</dbReference>
<dbReference type="PRO" id="PR:Q13131"/>
<dbReference type="Proteomes" id="UP000005640">
    <property type="component" value="Chromosome 5"/>
</dbReference>
<dbReference type="RNAct" id="Q13131">
    <property type="molecule type" value="protein"/>
</dbReference>
<dbReference type="Bgee" id="ENSG00000132356">
    <property type="expression patterns" value="Expressed in calcaneal tendon and 178 other cell types or tissues"/>
</dbReference>
<dbReference type="ExpressionAtlas" id="Q13131">
    <property type="expression patterns" value="baseline and differential"/>
</dbReference>
<dbReference type="GO" id="GO:0016324">
    <property type="term" value="C:apical plasma membrane"/>
    <property type="evidence" value="ECO:0007669"/>
    <property type="project" value="Ensembl"/>
</dbReference>
<dbReference type="GO" id="GO:0030424">
    <property type="term" value="C:axon"/>
    <property type="evidence" value="ECO:0000250"/>
    <property type="project" value="ARUK-UCL"/>
</dbReference>
<dbReference type="GO" id="GO:0000785">
    <property type="term" value="C:chromatin"/>
    <property type="evidence" value="ECO:0007669"/>
    <property type="project" value="Ensembl"/>
</dbReference>
<dbReference type="GO" id="GO:0036064">
    <property type="term" value="C:ciliary basal body"/>
    <property type="evidence" value="ECO:0000314"/>
    <property type="project" value="HPA"/>
</dbReference>
<dbReference type="GO" id="GO:0005929">
    <property type="term" value="C:cilium"/>
    <property type="evidence" value="ECO:0000314"/>
    <property type="project" value="HPA"/>
</dbReference>
<dbReference type="GO" id="GO:0005737">
    <property type="term" value="C:cytoplasm"/>
    <property type="evidence" value="ECO:0000314"/>
    <property type="project" value="ARUK-UCL"/>
</dbReference>
<dbReference type="GO" id="GO:0005829">
    <property type="term" value="C:cytosol"/>
    <property type="evidence" value="ECO:0000314"/>
    <property type="project" value="HPA"/>
</dbReference>
<dbReference type="GO" id="GO:0030425">
    <property type="term" value="C:dendrite"/>
    <property type="evidence" value="ECO:0000250"/>
    <property type="project" value="ARUK-UCL"/>
</dbReference>
<dbReference type="GO" id="GO:0043025">
    <property type="term" value="C:neuronal cell body"/>
    <property type="evidence" value="ECO:0000250"/>
    <property type="project" value="ARUK-UCL"/>
</dbReference>
<dbReference type="GO" id="GO:0016607">
    <property type="term" value="C:nuclear speck"/>
    <property type="evidence" value="ECO:0000314"/>
    <property type="project" value="HPA"/>
</dbReference>
<dbReference type="GO" id="GO:0005654">
    <property type="term" value="C:nucleoplasm"/>
    <property type="evidence" value="ECO:0000304"/>
    <property type="project" value="Reactome"/>
</dbReference>
<dbReference type="GO" id="GO:0031588">
    <property type="term" value="C:nucleotide-activated protein kinase complex"/>
    <property type="evidence" value="ECO:0000353"/>
    <property type="project" value="ComplexPortal"/>
</dbReference>
<dbReference type="GO" id="GO:0005634">
    <property type="term" value="C:nucleus"/>
    <property type="evidence" value="ECO:0000250"/>
    <property type="project" value="UniProtKB"/>
</dbReference>
<dbReference type="GO" id="GO:0047322">
    <property type="term" value="F:[hydroxymethylglutaryl-CoA reductase (NADPH)] kinase activity"/>
    <property type="evidence" value="ECO:0007669"/>
    <property type="project" value="UniProtKB-EC"/>
</dbReference>
<dbReference type="GO" id="GO:0004679">
    <property type="term" value="F:AMP-activated protein kinase activity"/>
    <property type="evidence" value="ECO:0000314"/>
    <property type="project" value="UniProtKB"/>
</dbReference>
<dbReference type="GO" id="GO:0005524">
    <property type="term" value="F:ATP binding"/>
    <property type="evidence" value="ECO:0007669"/>
    <property type="project" value="UniProtKB-KW"/>
</dbReference>
<dbReference type="GO" id="GO:0004691">
    <property type="term" value="F:cAMP-dependent protein kinase activity"/>
    <property type="evidence" value="ECO:0000303"/>
    <property type="project" value="UniProtKB"/>
</dbReference>
<dbReference type="GO" id="GO:0003682">
    <property type="term" value="F:chromatin binding"/>
    <property type="evidence" value="ECO:0000250"/>
    <property type="project" value="UniProtKB"/>
</dbReference>
<dbReference type="GO" id="GO:0140823">
    <property type="term" value="F:histone H2BS36 kinase activity"/>
    <property type="evidence" value="ECO:0000250"/>
    <property type="project" value="UniProtKB"/>
</dbReference>
<dbReference type="GO" id="GO:0046872">
    <property type="term" value="F:metal ion binding"/>
    <property type="evidence" value="ECO:0007669"/>
    <property type="project" value="UniProtKB-KW"/>
</dbReference>
<dbReference type="GO" id="GO:0004672">
    <property type="term" value="F:protein kinase activity"/>
    <property type="evidence" value="ECO:0000314"/>
    <property type="project" value="UniProtKB"/>
</dbReference>
<dbReference type="GO" id="GO:0106310">
    <property type="term" value="F:protein serine kinase activity"/>
    <property type="evidence" value="ECO:0007669"/>
    <property type="project" value="RHEA"/>
</dbReference>
<dbReference type="GO" id="GO:0004674">
    <property type="term" value="F:protein serine/threonine kinase activity"/>
    <property type="evidence" value="ECO:0000314"/>
    <property type="project" value="UniProt"/>
</dbReference>
<dbReference type="GO" id="GO:0044877">
    <property type="term" value="F:protein-containing complex binding"/>
    <property type="evidence" value="ECO:0007669"/>
    <property type="project" value="Ensembl"/>
</dbReference>
<dbReference type="GO" id="GO:0048156">
    <property type="term" value="F:tau protein binding"/>
    <property type="evidence" value="ECO:0000303"/>
    <property type="project" value="ARUK-UCL"/>
</dbReference>
<dbReference type="GO" id="GO:0050321">
    <property type="term" value="F:tau-protein kinase activity"/>
    <property type="evidence" value="ECO:0000303"/>
    <property type="project" value="ARUK-UCL"/>
</dbReference>
<dbReference type="GO" id="GO:0006914">
    <property type="term" value="P:autophagy"/>
    <property type="evidence" value="ECO:0007669"/>
    <property type="project" value="UniProtKB-KW"/>
</dbReference>
<dbReference type="GO" id="GO:0061762">
    <property type="term" value="P:CAMKK-AMPK signaling cascade"/>
    <property type="evidence" value="ECO:0000315"/>
    <property type="project" value="ParkinsonsUK-UCL"/>
</dbReference>
<dbReference type="GO" id="GO:0071277">
    <property type="term" value="P:cellular response to calcium ion"/>
    <property type="evidence" value="ECO:0000250"/>
    <property type="project" value="ARUK-UCL"/>
</dbReference>
<dbReference type="GO" id="GO:0071361">
    <property type="term" value="P:cellular response to ethanol"/>
    <property type="evidence" value="ECO:0007669"/>
    <property type="project" value="Ensembl"/>
</dbReference>
<dbReference type="GO" id="GO:0042149">
    <property type="term" value="P:cellular response to glucose starvation"/>
    <property type="evidence" value="ECO:0000314"/>
    <property type="project" value="UniProtKB"/>
</dbReference>
<dbReference type="GO" id="GO:0071333">
    <property type="term" value="P:cellular response to glucose stimulus"/>
    <property type="evidence" value="ECO:0000250"/>
    <property type="project" value="ARUK-UCL"/>
</dbReference>
<dbReference type="GO" id="GO:0070301">
    <property type="term" value="P:cellular response to hydrogen peroxide"/>
    <property type="evidence" value="ECO:0007669"/>
    <property type="project" value="Ensembl"/>
</dbReference>
<dbReference type="GO" id="GO:0071456">
    <property type="term" value="P:cellular response to hypoxia"/>
    <property type="evidence" value="ECO:0007669"/>
    <property type="project" value="Ensembl"/>
</dbReference>
<dbReference type="GO" id="GO:0031669">
    <property type="term" value="P:cellular response to nutrient levels"/>
    <property type="evidence" value="ECO:0000314"/>
    <property type="project" value="ComplexPortal"/>
</dbReference>
<dbReference type="GO" id="GO:0034599">
    <property type="term" value="P:cellular response to oxidative stress"/>
    <property type="evidence" value="ECO:0000250"/>
    <property type="project" value="ARUK-UCL"/>
</dbReference>
<dbReference type="GO" id="GO:0071380">
    <property type="term" value="P:cellular response to prostaglandin E stimulus"/>
    <property type="evidence" value="ECO:0007669"/>
    <property type="project" value="Ensembl"/>
</dbReference>
<dbReference type="GO" id="GO:0033554">
    <property type="term" value="P:cellular response to stress"/>
    <property type="evidence" value="ECO:0000314"/>
    <property type="project" value="UniProt"/>
</dbReference>
<dbReference type="GO" id="GO:0071466">
    <property type="term" value="P:cellular response to xenobiotic stimulus"/>
    <property type="evidence" value="ECO:0007669"/>
    <property type="project" value="Ensembl"/>
</dbReference>
<dbReference type="GO" id="GO:0006695">
    <property type="term" value="P:cholesterol biosynthetic process"/>
    <property type="evidence" value="ECO:0007669"/>
    <property type="project" value="UniProtKB-KW"/>
</dbReference>
<dbReference type="GO" id="GO:0009631">
    <property type="term" value="P:cold acclimation"/>
    <property type="evidence" value="ECO:0007669"/>
    <property type="project" value="Ensembl"/>
</dbReference>
<dbReference type="GO" id="GO:0097009">
    <property type="term" value="P:energy homeostasis"/>
    <property type="evidence" value="ECO:0000250"/>
    <property type="project" value="UniProtKB"/>
</dbReference>
<dbReference type="GO" id="GO:0006633">
    <property type="term" value="P:fatty acid biosynthetic process"/>
    <property type="evidence" value="ECO:0007669"/>
    <property type="project" value="UniProtKB-KW"/>
</dbReference>
<dbReference type="GO" id="GO:0055089">
    <property type="term" value="P:fatty acid homeostasis"/>
    <property type="evidence" value="ECO:0000250"/>
    <property type="project" value="UniProtKB"/>
</dbReference>
<dbReference type="GO" id="GO:0019395">
    <property type="term" value="P:fatty acid oxidation"/>
    <property type="evidence" value="ECO:0007669"/>
    <property type="project" value="Ensembl"/>
</dbReference>
<dbReference type="GO" id="GO:0042593">
    <property type="term" value="P:glucose homeostasis"/>
    <property type="evidence" value="ECO:0000250"/>
    <property type="project" value="UniProtKB"/>
</dbReference>
<dbReference type="GO" id="GO:0006006">
    <property type="term" value="P:glucose metabolic process"/>
    <property type="evidence" value="ECO:0007669"/>
    <property type="project" value="Ensembl"/>
</dbReference>
<dbReference type="GO" id="GO:0008610">
    <property type="term" value="P:lipid biosynthetic process"/>
    <property type="evidence" value="ECO:0000250"/>
    <property type="project" value="UniProtKB"/>
</dbReference>
<dbReference type="GO" id="GO:1905691">
    <property type="term" value="P:lipid droplet disassembly"/>
    <property type="evidence" value="ECO:0000314"/>
    <property type="project" value="UniProtKB"/>
</dbReference>
<dbReference type="GO" id="GO:0061744">
    <property type="term" value="P:motor behavior"/>
    <property type="evidence" value="ECO:0000316"/>
    <property type="project" value="ARUK-UCL"/>
</dbReference>
<dbReference type="GO" id="GO:0043066">
    <property type="term" value="P:negative regulation of apoptotic process"/>
    <property type="evidence" value="ECO:0000250"/>
    <property type="project" value="UniProtKB"/>
</dbReference>
<dbReference type="GO" id="GO:0010629">
    <property type="term" value="P:negative regulation of gene expression"/>
    <property type="evidence" value="ECO:0000250"/>
    <property type="project" value="ARUK-UCL"/>
</dbReference>
<dbReference type="GO" id="GO:0046318">
    <property type="term" value="P:negative regulation of glucosylceramide biosynthetic process"/>
    <property type="evidence" value="ECO:0000303"/>
    <property type="project" value="UniProtKB"/>
</dbReference>
<dbReference type="GO" id="GO:1903944">
    <property type="term" value="P:negative regulation of hepatocyte apoptotic process"/>
    <property type="evidence" value="ECO:0000314"/>
    <property type="project" value="UniProt"/>
</dbReference>
<dbReference type="GO" id="GO:0046627">
    <property type="term" value="P:negative regulation of insulin receptor signaling pathway"/>
    <property type="evidence" value="ECO:0007669"/>
    <property type="project" value="Ensembl"/>
</dbReference>
<dbReference type="GO" id="GO:0050995">
    <property type="term" value="P:negative regulation of lipid catabolic process"/>
    <property type="evidence" value="ECO:0000250"/>
    <property type="project" value="UniProtKB"/>
</dbReference>
<dbReference type="GO" id="GO:0032007">
    <property type="term" value="P:negative regulation of TOR signaling"/>
    <property type="evidence" value="ECO:0000250"/>
    <property type="project" value="UniProtKB"/>
</dbReference>
<dbReference type="GO" id="GO:1904262">
    <property type="term" value="P:negative regulation of TORC1 signaling"/>
    <property type="evidence" value="ECO:0000314"/>
    <property type="project" value="UniProtKB"/>
</dbReference>
<dbReference type="GO" id="GO:1904428">
    <property type="term" value="P:negative regulation of tubulin deacetylation"/>
    <property type="evidence" value="ECO:0000250"/>
    <property type="project" value="ARUK-UCL"/>
</dbReference>
<dbReference type="GO" id="GO:0070050">
    <property type="term" value="P:neuron cellular homeostasis"/>
    <property type="evidence" value="ECO:0000316"/>
    <property type="project" value="ARUK-UCL"/>
</dbReference>
<dbReference type="GO" id="GO:1904179">
    <property type="term" value="P:positive regulation of adipose tissue development"/>
    <property type="evidence" value="ECO:0000250"/>
    <property type="project" value="UniProt"/>
</dbReference>
<dbReference type="GO" id="GO:0010508">
    <property type="term" value="P:positive regulation of autophagy"/>
    <property type="evidence" value="ECO:0000314"/>
    <property type="project" value="ParkinsonsUK-UCL"/>
</dbReference>
<dbReference type="GO" id="GO:0008284">
    <property type="term" value="P:positive regulation of cell population proliferation"/>
    <property type="evidence" value="ECO:0007669"/>
    <property type="project" value="Ensembl"/>
</dbReference>
<dbReference type="GO" id="GO:0045542">
    <property type="term" value="P:positive regulation of cholesterol biosynthetic process"/>
    <property type="evidence" value="ECO:0000303"/>
    <property type="project" value="UniProtKB"/>
</dbReference>
<dbReference type="GO" id="GO:0045893">
    <property type="term" value="P:positive regulation of DNA-templated transcription"/>
    <property type="evidence" value="ECO:0000250"/>
    <property type="project" value="UniProt"/>
</dbReference>
<dbReference type="GO" id="GO:0010628">
    <property type="term" value="P:positive regulation of gene expression"/>
    <property type="evidence" value="ECO:0007669"/>
    <property type="project" value="Ensembl"/>
</dbReference>
<dbReference type="GO" id="GO:0045821">
    <property type="term" value="P:positive regulation of glycolytic process"/>
    <property type="evidence" value="ECO:0000250"/>
    <property type="project" value="UniProtKB"/>
</dbReference>
<dbReference type="GO" id="GO:1903109">
    <property type="term" value="P:positive regulation of mitochondrial transcription"/>
    <property type="evidence" value="ECO:0007669"/>
    <property type="project" value="Ensembl"/>
</dbReference>
<dbReference type="GO" id="GO:1903829">
    <property type="term" value="P:positive regulation of protein localization"/>
    <property type="evidence" value="ECO:0000250"/>
    <property type="project" value="ARUK-UCL"/>
</dbReference>
<dbReference type="GO" id="GO:1903955">
    <property type="term" value="P:positive regulation of protein targeting to mitochondrion"/>
    <property type="evidence" value="ECO:0007669"/>
    <property type="project" value="Ensembl"/>
</dbReference>
<dbReference type="GO" id="GO:0048643">
    <property type="term" value="P:positive regulation of skeletal muscle tissue development"/>
    <property type="evidence" value="ECO:0007669"/>
    <property type="project" value="Ensembl"/>
</dbReference>
<dbReference type="GO" id="GO:0050870">
    <property type="term" value="P:positive regulation of T cell activation"/>
    <property type="evidence" value="ECO:0000314"/>
    <property type="project" value="UniProt"/>
</dbReference>
<dbReference type="GO" id="GO:0002842">
    <property type="term" value="P:positive regulation of T cell mediated immune response to tumor cell"/>
    <property type="evidence" value="ECO:0000314"/>
    <property type="project" value="UniProt"/>
</dbReference>
<dbReference type="GO" id="GO:1990044">
    <property type="term" value="P:protein localization to lipid droplet"/>
    <property type="evidence" value="ECO:0000314"/>
    <property type="project" value="UniProtKB"/>
</dbReference>
<dbReference type="GO" id="GO:0006468">
    <property type="term" value="P:protein phosphorylation"/>
    <property type="evidence" value="ECO:0000304"/>
    <property type="project" value="ProtInc"/>
</dbReference>
<dbReference type="GO" id="GO:0042752">
    <property type="term" value="P:regulation of circadian rhythm"/>
    <property type="evidence" value="ECO:0000250"/>
    <property type="project" value="UniProtKB"/>
</dbReference>
<dbReference type="GO" id="GO:0070507">
    <property type="term" value="P:regulation of microtubule cytoskeleton organization"/>
    <property type="evidence" value="ECO:0000250"/>
    <property type="project" value="ARUK-UCL"/>
</dbReference>
<dbReference type="GO" id="GO:0062028">
    <property type="term" value="P:regulation of stress granule assembly"/>
    <property type="evidence" value="ECO:0007669"/>
    <property type="project" value="Ensembl"/>
</dbReference>
<dbReference type="GO" id="GO:0060627">
    <property type="term" value="P:regulation of vesicle-mediated transport"/>
    <property type="evidence" value="ECO:0007669"/>
    <property type="project" value="Ensembl"/>
</dbReference>
<dbReference type="GO" id="GO:0014823">
    <property type="term" value="P:response to activity"/>
    <property type="evidence" value="ECO:0007669"/>
    <property type="project" value="Ensembl"/>
</dbReference>
<dbReference type="GO" id="GO:0031000">
    <property type="term" value="P:response to caffeine"/>
    <property type="evidence" value="ECO:0007669"/>
    <property type="project" value="Ensembl"/>
</dbReference>
<dbReference type="GO" id="GO:0043627">
    <property type="term" value="P:response to estrogen"/>
    <property type="evidence" value="ECO:0007669"/>
    <property type="project" value="Ensembl"/>
</dbReference>
<dbReference type="GO" id="GO:0010332">
    <property type="term" value="P:response to gamma radiation"/>
    <property type="evidence" value="ECO:0000250"/>
    <property type="project" value="UniProtKB"/>
</dbReference>
<dbReference type="GO" id="GO:0001666">
    <property type="term" value="P:response to hypoxia"/>
    <property type="evidence" value="ECO:0000303"/>
    <property type="project" value="UniProtKB"/>
</dbReference>
<dbReference type="GO" id="GO:0009411">
    <property type="term" value="P:response to UV"/>
    <property type="evidence" value="ECO:0007669"/>
    <property type="project" value="Ensembl"/>
</dbReference>
<dbReference type="GO" id="GO:0048511">
    <property type="term" value="P:rhythmic process"/>
    <property type="evidence" value="ECO:0007669"/>
    <property type="project" value="UniProtKB-KW"/>
</dbReference>
<dbReference type="GO" id="GO:0007165">
    <property type="term" value="P:signal transduction"/>
    <property type="evidence" value="ECO:0000304"/>
    <property type="project" value="ProtInc"/>
</dbReference>
<dbReference type="GO" id="GO:0016055">
    <property type="term" value="P:Wnt signaling pathway"/>
    <property type="evidence" value="ECO:0007669"/>
    <property type="project" value="UniProtKB-KW"/>
</dbReference>
<dbReference type="CDD" id="cd12199">
    <property type="entry name" value="AMPKA1_C"/>
    <property type="match status" value="1"/>
</dbReference>
<dbReference type="CDD" id="cd14079">
    <property type="entry name" value="STKc_AMPK_alpha"/>
    <property type="match status" value="1"/>
</dbReference>
<dbReference type="CDD" id="cd14403">
    <property type="entry name" value="UBA_AID_AAPK1"/>
    <property type="match status" value="1"/>
</dbReference>
<dbReference type="FunFam" id="1.10.510.10:FF:000079">
    <property type="entry name" value="Non-specific serine/threonine protein kinase"/>
    <property type="match status" value="1"/>
</dbReference>
<dbReference type="FunFam" id="1.10.8.10:FF:000014">
    <property type="entry name" value="Non-specific serine/threonine protein kinase"/>
    <property type="match status" value="1"/>
</dbReference>
<dbReference type="FunFam" id="3.30.200.20:FF:000136">
    <property type="entry name" value="Non-specific serine/threonine protein kinase"/>
    <property type="match status" value="1"/>
</dbReference>
<dbReference type="FunFam" id="3.30.310.80:FF:000003">
    <property type="entry name" value="Non-specific serine/threonine protein kinase"/>
    <property type="match status" value="1"/>
</dbReference>
<dbReference type="Gene3D" id="1.10.8.10">
    <property type="entry name" value="DNA helicase RuvA subunit, C-terminal domain"/>
    <property type="match status" value="1"/>
</dbReference>
<dbReference type="Gene3D" id="3.30.310.80">
    <property type="entry name" value="Kinase associated domain 1, KA1"/>
    <property type="match status" value="1"/>
</dbReference>
<dbReference type="Gene3D" id="3.30.200.20">
    <property type="entry name" value="Phosphorylase Kinase, domain 1"/>
    <property type="match status" value="1"/>
</dbReference>
<dbReference type="Gene3D" id="1.10.510.10">
    <property type="entry name" value="Transferase(Phosphotransferase) domain 1"/>
    <property type="match status" value="1"/>
</dbReference>
<dbReference type="InterPro" id="IPR032270">
    <property type="entry name" value="AMPK_C"/>
</dbReference>
<dbReference type="InterPro" id="IPR039137">
    <property type="entry name" value="AMPKA1_C"/>
</dbReference>
<dbReference type="InterPro" id="IPR028375">
    <property type="entry name" value="KA1/Ssp2_C"/>
</dbReference>
<dbReference type="InterPro" id="IPR011009">
    <property type="entry name" value="Kinase-like_dom_sf"/>
</dbReference>
<dbReference type="InterPro" id="IPR049020">
    <property type="entry name" value="PRKAA1/2_AID"/>
</dbReference>
<dbReference type="InterPro" id="IPR028797">
    <property type="entry name" value="PRKAA1_UBA"/>
</dbReference>
<dbReference type="InterPro" id="IPR000719">
    <property type="entry name" value="Prot_kinase_dom"/>
</dbReference>
<dbReference type="InterPro" id="IPR017441">
    <property type="entry name" value="Protein_kinase_ATP_BS"/>
</dbReference>
<dbReference type="InterPro" id="IPR008271">
    <property type="entry name" value="Ser/Thr_kinase_AS"/>
</dbReference>
<dbReference type="PANTHER" id="PTHR24346:SF87">
    <property type="entry name" value="ACETYL-COA CARBOXYLASE KINASE"/>
    <property type="match status" value="1"/>
</dbReference>
<dbReference type="PANTHER" id="PTHR24346">
    <property type="entry name" value="MAP/MICROTUBULE AFFINITY-REGULATING KINASE"/>
    <property type="match status" value="1"/>
</dbReference>
<dbReference type="Pfam" id="PF16579">
    <property type="entry name" value="AdenylateSensor"/>
    <property type="match status" value="1"/>
</dbReference>
<dbReference type="Pfam" id="PF21147">
    <property type="entry name" value="AMPK_alpha_AID"/>
    <property type="match status" value="1"/>
</dbReference>
<dbReference type="Pfam" id="PF00069">
    <property type="entry name" value="Pkinase"/>
    <property type="match status" value="1"/>
</dbReference>
<dbReference type="SMART" id="SM00220">
    <property type="entry name" value="S_TKc"/>
    <property type="match status" value="1"/>
</dbReference>
<dbReference type="SUPFAM" id="SSF103243">
    <property type="entry name" value="KA1-like"/>
    <property type="match status" value="1"/>
</dbReference>
<dbReference type="SUPFAM" id="SSF56112">
    <property type="entry name" value="Protein kinase-like (PK-like)"/>
    <property type="match status" value="1"/>
</dbReference>
<dbReference type="PROSITE" id="PS00107">
    <property type="entry name" value="PROTEIN_KINASE_ATP"/>
    <property type="match status" value="1"/>
</dbReference>
<dbReference type="PROSITE" id="PS50011">
    <property type="entry name" value="PROTEIN_KINASE_DOM"/>
    <property type="match status" value="1"/>
</dbReference>
<dbReference type="PROSITE" id="PS00108">
    <property type="entry name" value="PROTEIN_KINASE_ST"/>
    <property type="match status" value="1"/>
</dbReference>
<proteinExistence type="evidence at protein level"/>
<comment type="function">
    <text evidence="1 2 6 7 9 10 13 19 20 21 23 25 26 27 30 31 32 33 34 35 36 37 40 41">Catalytic subunit of AMP-activated protein kinase (AMPK), an energy sensor protein kinase that plays a key role in regulating cellular energy metabolism (PubMed:17307971, PubMed:17712357, PubMed:24563466, PubMed:37821951). In response to reduction of intracellular ATP levels, AMPK activates energy-producing pathways and inhibits energy-consuming processes: inhibits protein, carbohydrate and lipid biosynthesis, as well as cell growth and proliferation (PubMed:17307971, PubMed:17712357). AMPK acts via direct phosphorylation of metabolic enzymes, and by longer-term effects via phosphorylation of transcription regulators (PubMed:17307971, PubMed:17712357). Regulates lipid synthesis by phosphorylating and inactivating lipid metabolic enzymes such as ACACA, ACACB, GYS1, HMGCR and LIPE; regulates fatty acid and cholesterol synthesis by phosphorylating acetyl-CoA carboxylase (ACACA and ACACB) and hormone-sensitive lipase (LIPE) enzymes, respectively (By similarity). Promotes lipolysis of lipid droplets by mediating phosphorylation of isoform 1 of CHKA (CHKalpha2) (PubMed:34077757). Regulates insulin-signaling and glycolysis by phosphorylating IRS1, PFKFB2 and PFKFB3 (By similarity). AMPK stimulates glucose uptake in muscle by increasing the translocation of the glucose transporter SLC2A4/GLUT4 to the plasma membrane, possibly by mediating phosphorylation of TBC1D4/AS160 (By similarity). Regulates transcription and chromatin structure by phosphorylating transcription regulators involved in energy metabolism such as CRTC2/TORC2, FOXO3, histone H2B, HDAC5, MEF2C, MLXIPL/ChREBP, EP300, HNF4A, p53/TP53, SREBF1, SREBF2 and PPARGC1A (PubMed:11518699, PubMed:11554766, PubMed:15866171, PubMed:17711846, PubMed:18184930). Acts as a key regulator of glucose homeostasis in liver by phosphorylating CRTC2/TORC2, leading to CRTC2/TORC2 sequestration in the cytoplasm (By similarity). In response to stress, phosphorylates 'Ser-36' of histone H2B (H2BS36ph), leading to promote transcription (By similarity). Acts as a key regulator of cell growth and proliferation by phosphorylating FNIP1, TSC2, RPTOR, WDR24 and ATG1/ULK1: in response to nutrient limitation, negatively regulates the mTORC1 complex by phosphorylating RPTOR component of the mTORC1 complex and by phosphorylating and activating TSC2 (PubMed:14651849, PubMed:18439900, PubMed:20160076, PubMed:21205641). Also phosphorylates and inhibits GATOR2 subunit WDR24 in response to nutrient limitation, leading to suppress glucose-mediated mTORC1 activation (PubMed:36732624). In response to energetic stress, phosphorylates FNIP1, inactivating the non-canonical mTORC1 signaling, thereby promoting nuclear translocation of TFEB and TFE3, and inducing transcription of lysosomal or autophagy genes (PubMed:37079666). In response to nutrient limitation, promotes autophagy by phosphorylating and activating ATG1/ULK1 (PubMed:21205641). In that process, it also activates WDR45/WIPI4 (PubMed:28561066). Phosphorylates CASP6, thereby preventing its autoprocessing and subsequent activation (PubMed:32029622). In response to nutrient limitation, phosphorylates transcription factor FOXO3 promoting FOXO3 mitochondrial import (By similarity). Also acts as a regulator of cellular polarity by remodeling the actin cytoskeleton; probably by indirectly activating myosin (PubMed:17486097). AMPK also acts as a regulator of circadian rhythm by mediating phosphorylation of CRY1, leading to destabilize it (By similarity). May regulate the Wnt signaling pathway by phosphorylating CTNNB1, leading to stabilize it (By similarity). Also has tau-protein kinase activity: in response to amyloid beta A4 protein (APP) exposure, activated by CAMKK2, leading to phosphorylation of MAPT/TAU; however the relevance of such data remains unclear in vivo (By similarity). Also phosphorylates CFTR, EEF2K, KLC1, NOS3 and SLC12A1 (PubMed:12519745, PubMed:20074060). Regulates hepatic lipogenesis. Activated via SIRT3, represses sterol regulatory element-binding protein (SREBP) transcriptional activities and ATP-consuming lipogenesis to restore cellular energy balance. Upon stress, regulates mitochondrial fragmentation through phosphorylation of MTFR1L (PubMed:36367943).</text>
</comment>
<comment type="catalytic activity">
    <reaction evidence="32 35 36">
        <text>L-seryl-[protein] + ATP = O-phospho-L-seryl-[protein] + ADP + H(+)</text>
        <dbReference type="Rhea" id="RHEA:17989"/>
        <dbReference type="Rhea" id="RHEA-COMP:9863"/>
        <dbReference type="Rhea" id="RHEA-COMP:11604"/>
        <dbReference type="ChEBI" id="CHEBI:15378"/>
        <dbReference type="ChEBI" id="CHEBI:29999"/>
        <dbReference type="ChEBI" id="CHEBI:30616"/>
        <dbReference type="ChEBI" id="CHEBI:83421"/>
        <dbReference type="ChEBI" id="CHEBI:456216"/>
        <dbReference type="EC" id="2.7.11.1"/>
    </reaction>
</comment>
<comment type="catalytic activity">
    <reaction evidence="30">
        <text>L-threonyl-[protein] + ATP = O-phospho-L-threonyl-[protein] + ADP + H(+)</text>
        <dbReference type="Rhea" id="RHEA:46608"/>
        <dbReference type="Rhea" id="RHEA-COMP:11060"/>
        <dbReference type="Rhea" id="RHEA-COMP:11605"/>
        <dbReference type="ChEBI" id="CHEBI:15378"/>
        <dbReference type="ChEBI" id="CHEBI:30013"/>
        <dbReference type="ChEBI" id="CHEBI:30616"/>
        <dbReference type="ChEBI" id="CHEBI:61977"/>
        <dbReference type="ChEBI" id="CHEBI:456216"/>
        <dbReference type="EC" id="2.7.11.1"/>
    </reaction>
</comment>
<comment type="catalytic activity">
    <reaction evidence="1">
        <text>L-seryl-[acetyl-CoA carboxylase] + ATP = O-phospho-L-seryl-[acetyl-CoA carboxylase] + ADP + H(+)</text>
        <dbReference type="Rhea" id="RHEA:20333"/>
        <dbReference type="Rhea" id="RHEA-COMP:13722"/>
        <dbReference type="Rhea" id="RHEA-COMP:13723"/>
        <dbReference type="ChEBI" id="CHEBI:15378"/>
        <dbReference type="ChEBI" id="CHEBI:29999"/>
        <dbReference type="ChEBI" id="CHEBI:30616"/>
        <dbReference type="ChEBI" id="CHEBI:83421"/>
        <dbReference type="ChEBI" id="CHEBI:456216"/>
    </reaction>
</comment>
<comment type="catalytic activity">
    <reaction evidence="1">
        <text>L-seryl-[3-hydroxy-3-methylglutaryl-coenzyme A reductase] + ATP = O-phospho-L-seryl-[3-hydroxy-3-methylglutaryl-coenzyme A reductase] + ADP + H(+)</text>
        <dbReference type="Rhea" id="RHEA:23172"/>
        <dbReference type="Rhea" id="RHEA-COMP:13692"/>
        <dbReference type="Rhea" id="RHEA-COMP:13693"/>
        <dbReference type="ChEBI" id="CHEBI:15378"/>
        <dbReference type="ChEBI" id="CHEBI:29999"/>
        <dbReference type="ChEBI" id="CHEBI:30616"/>
        <dbReference type="ChEBI" id="CHEBI:83421"/>
        <dbReference type="ChEBI" id="CHEBI:456216"/>
        <dbReference type="EC" id="2.7.11.31"/>
    </reaction>
</comment>
<comment type="catalytic activity">
    <reaction evidence="1">
        <text>L-seryl-[tau protein] + ATP = O-phospho-L-seryl-[tau protein] + ADP + H(+)</text>
        <dbReference type="Rhea" id="RHEA:12801"/>
        <dbReference type="Rhea" id="RHEA-COMP:13701"/>
        <dbReference type="Rhea" id="RHEA-COMP:13702"/>
        <dbReference type="ChEBI" id="CHEBI:15378"/>
        <dbReference type="ChEBI" id="CHEBI:29999"/>
        <dbReference type="ChEBI" id="CHEBI:30616"/>
        <dbReference type="ChEBI" id="CHEBI:83421"/>
        <dbReference type="ChEBI" id="CHEBI:456216"/>
        <dbReference type="EC" id="2.7.11.26"/>
    </reaction>
</comment>
<comment type="catalytic activity">
    <reaction evidence="1">
        <text>L-threonyl-[tau protein] + ATP = O-phospho-L-threonyl-[tau protein] + ADP + H(+)</text>
        <dbReference type="Rhea" id="RHEA:53904"/>
        <dbReference type="Rhea" id="RHEA-COMP:13703"/>
        <dbReference type="Rhea" id="RHEA-COMP:13704"/>
        <dbReference type="ChEBI" id="CHEBI:15378"/>
        <dbReference type="ChEBI" id="CHEBI:30013"/>
        <dbReference type="ChEBI" id="CHEBI:30616"/>
        <dbReference type="ChEBI" id="CHEBI:61977"/>
        <dbReference type="ChEBI" id="CHEBI:456216"/>
        <dbReference type="EC" id="2.7.11.26"/>
    </reaction>
</comment>
<comment type="cofactor">
    <cofactor>
        <name>Mg(2+)</name>
        <dbReference type="ChEBI" id="CHEBI:18420"/>
    </cofactor>
</comment>
<comment type="activity regulation">
    <text evidence="8 11 14 15 29">Activated by phosphorylation on Thr-183. Binding of AMP to non-catalytic gamma subunit (PRKAG1, PRKAG2 or PRKAG3) results in allosteric activation, inducing phosphorylation on Thr-183. AMP-binding to gamma subunit also sustains activity by preventing dephosphorylation of Thr-183. ADP also stimulates Thr-183 phosphorylation, without stimulating already phosphorylated AMPK. ATP promotes dephosphorylation of Thr-183, rendering the enzyme inactive. Under physiological conditions AMPK mainly exists in its inactive form in complex with ATP, which is much more abundant than AMP. AMPK is activated by antihyperglycemic drug metformin, a drug prescribed to patients with type 2 diabetes: in vivo, metformin seems to mainly inhibit liver gluconeogenesis. However, metformin can be used to activate AMPK in muscle and other cells in culture or ex vivo (PubMed:11602624). Selectively inhibited by compound C (6-[4-(2-Piperidin-1-yl-ethoxy)-phenyl)]-3-pyridin-4-yl-pyyrazolo[1,5-a] pyrimidine. Activated by resveratrol, a natural polyphenol present in red wine, and S17834, a synthetic polyphenol.</text>
</comment>
<comment type="subunit">
    <text evidence="17 22 24 29">AMPK is a heterotrimer of an alpha catalytic subunit (PRKAA1 or PRKAA2), a beta (PRKAB1 or PRKAB2) and a gamma non-catalytic subunits (PRKAG1, PRKAG2 or PRKAG3) (PubMed:21680840). Interacts with FNIP1 and FNIP2 (PubMed:17028174, PubMed:18403135, PubMed:18663353).</text>
</comment>
<comment type="subunit">
    <text evidence="37">(Microbial infection) Interacts with Dengue type 2 virus non-structural protein 1; this interaction promotes the AMPK/ERK/mTOR signaling pathway to induce autophagy.</text>
</comment>
<comment type="interaction">
    <interactant intactId="EBI-1181405">
        <id>Q13131</id>
    </interactant>
    <interactant intactId="EBI-743598">
        <id>Q9NYB9</id>
        <label>ABI2</label>
    </interactant>
    <organismsDiffer>false</organismsDiffer>
    <experiments>5</experiments>
</comment>
<comment type="interaction">
    <interactant intactId="EBI-1181405">
        <id>Q13131</id>
    </interactant>
    <interactant intactId="EBI-711810">
        <id>O14503</id>
        <label>BHLHE40</label>
    </interactant>
    <organismsDiffer>false</organismsDiffer>
    <experiments>3</experiments>
</comment>
<comment type="interaction">
    <interactant intactId="EBI-1181405">
        <id>Q13131</id>
    </interactant>
    <interactant intactId="EBI-10181162">
        <id>O14627</id>
        <label>CDX4</label>
    </interactant>
    <organismsDiffer>false</organismsDiffer>
    <experiments>3</experiments>
</comment>
<comment type="interaction">
    <interactant intactId="EBI-1181405">
        <id>Q13131</id>
    </interactant>
    <interactant intactId="EBI-10171858">
        <id>Q13363-2</id>
        <label>CTBP1</label>
    </interactant>
    <organismsDiffer>false</organismsDiffer>
    <experiments>3</experiments>
</comment>
<comment type="interaction">
    <interactant intactId="EBI-1181405">
        <id>Q13131</id>
    </interactant>
    <interactant intactId="EBI-1059030">
        <id>O95073</id>
        <label>FSBP</label>
    </interactant>
    <organismsDiffer>false</organismsDiffer>
    <experiments>3</experiments>
</comment>
<comment type="interaction">
    <interactant intactId="EBI-1181405">
        <id>Q13131</id>
    </interactant>
    <interactant intactId="EBI-618309">
        <id>Q08379</id>
        <label>GOLGA2</label>
    </interactant>
    <organismsDiffer>false</organismsDiffer>
    <experiments>3</experiments>
</comment>
<comment type="interaction">
    <interactant intactId="EBI-1181405">
        <id>Q13131</id>
    </interactant>
    <interactant intactId="EBI-2549423">
        <id>Q6NT76</id>
        <label>HMBOX1</label>
    </interactant>
    <organismsDiffer>false</organismsDiffer>
    <experiments>3</experiments>
</comment>
<comment type="interaction">
    <interactant intactId="EBI-1181405">
        <id>Q13131</id>
    </interactant>
    <interactant intactId="EBI-10172004">
        <id>Q8IX15-3</id>
        <label>HOMEZ</label>
    </interactant>
    <organismsDiffer>false</organismsDiffer>
    <experiments>3</experiments>
</comment>
<comment type="interaction">
    <interactant intactId="EBI-1181405">
        <id>Q13131</id>
    </interactant>
    <interactant intactId="EBI-352572">
        <id>P08238</id>
        <label>HSP90AB1</label>
    </interactant>
    <organismsDiffer>false</organismsDiffer>
    <experiments>2</experiments>
</comment>
<comment type="interaction">
    <interactant intactId="EBI-1181405">
        <id>Q13131</id>
    </interactant>
    <interactant intactId="EBI-747204">
        <id>Q9UKT9</id>
        <label>IKZF3</label>
    </interactant>
    <organismsDiffer>false</organismsDiffer>
    <experiments>3</experiments>
</comment>
<comment type="interaction">
    <interactant intactId="EBI-1181405">
        <id>Q13131</id>
    </interactant>
    <interactant intactId="EBI-769401">
        <id>Q8NBZ0</id>
        <label>INO80E</label>
    </interactant>
    <organismsDiffer>false</organismsDiffer>
    <experiments>3</experiments>
</comment>
<comment type="interaction">
    <interactant intactId="EBI-1181405">
        <id>Q13131</id>
    </interactant>
    <interactant intactId="EBI-10171697">
        <id>Q6A162</id>
        <label>KRT40</label>
    </interactant>
    <organismsDiffer>false</organismsDiffer>
    <experiments>3</experiments>
</comment>
<comment type="interaction">
    <interactant intactId="EBI-1181405">
        <id>Q13131</id>
    </interactant>
    <interactant intactId="EBI-2686809">
        <id>Q96JM7</id>
        <label>L3MBTL3</label>
    </interactant>
    <organismsDiffer>false</organismsDiffer>
    <experiments>3</experiments>
</comment>
<comment type="interaction">
    <interactant intactId="EBI-1181405">
        <id>Q13131</id>
    </interactant>
    <interactant intactId="EBI-742948">
        <id>Q5JR59</id>
        <label>MTUS2</label>
    </interactant>
    <organismsDiffer>false</organismsDiffer>
    <experiments>3</experiments>
</comment>
<comment type="interaction">
    <interactant intactId="EBI-1181405">
        <id>Q13131</id>
    </interactant>
    <interactant intactId="EBI-713786">
        <id>Q8IXK0</id>
        <label>PHC2</label>
    </interactant>
    <organismsDiffer>false</organismsDiffer>
    <experiments>3</experiments>
</comment>
<comment type="interaction">
    <interactant intactId="EBI-1181405">
        <id>Q13131</id>
    </interactant>
    <interactant intactId="EBI-10171633">
        <id>Q96PV4</id>
        <label>PNMA5</label>
    </interactant>
    <organismsDiffer>false</organismsDiffer>
    <experiments>4</experiments>
</comment>
<comment type="interaction">
    <interactant intactId="EBI-1181405">
        <id>Q13131</id>
    </interactant>
    <interactant intactId="EBI-719769">
        <id>Q9Y478</id>
        <label>PRKAB1</label>
    </interactant>
    <organismsDiffer>false</organismsDiffer>
    <experiments>12</experiments>
</comment>
<comment type="interaction">
    <interactant intactId="EBI-1181405">
        <id>Q13131</id>
    </interactant>
    <interactant intactId="EBI-1053424">
        <id>O43741</id>
        <label>PRKAB2</label>
    </interactant>
    <organismsDiffer>false</organismsDiffer>
    <experiments>20</experiments>
</comment>
<comment type="interaction">
    <interactant intactId="EBI-1181405">
        <id>Q13131</id>
    </interactant>
    <interactant intactId="EBI-1181439">
        <id>P54619</id>
        <label>PRKAG1</label>
    </interactant>
    <organismsDiffer>false</organismsDiffer>
    <experiments>17</experiments>
</comment>
<comment type="interaction">
    <interactant intactId="EBI-1181405">
        <id>Q13131</id>
    </interactant>
    <interactant intactId="EBI-740322">
        <id>Q93062</id>
        <label>RBPMS</label>
    </interactant>
    <organismsDiffer>false</organismsDiffer>
    <experiments>3</experiments>
</comment>
<comment type="interaction">
    <interactant intactId="EBI-1181405">
        <id>Q13131</id>
    </interactant>
    <interactant intactId="EBI-746118">
        <id>Q8HWS3</id>
        <label>RFX6</label>
    </interactant>
    <organismsDiffer>false</organismsDiffer>
    <experiments>3</experiments>
</comment>
<comment type="interaction">
    <interactant intactId="EBI-1181405">
        <id>Q13131</id>
    </interactant>
    <interactant intactId="EBI-10182375">
        <id>Q9UFD9</id>
        <label>RIMBP3</label>
    </interactant>
    <organismsDiffer>false</organismsDiffer>
    <experiments>3</experiments>
</comment>
<comment type="interaction">
    <interactant intactId="EBI-1181405">
        <id>Q13131</id>
    </interactant>
    <interactant intactId="EBI-1378139">
        <id>Q9HAT0</id>
        <label>ROPN1</label>
    </interactant>
    <organismsDiffer>false</organismsDiffer>
    <experiments>4</experiments>
</comment>
<comment type="interaction">
    <interactant intactId="EBI-1181405">
        <id>Q13131</id>
    </interactant>
    <interactant intactId="EBI-2212028">
        <id>Q9Y2D8</id>
        <label>SSX2IP</label>
    </interactant>
    <organismsDiffer>false</organismsDiffer>
    <experiments>3</experiments>
</comment>
<comment type="interaction">
    <interactant intactId="EBI-1181405">
        <id>Q13131</id>
    </interactant>
    <interactant intactId="EBI-741515">
        <id>Q9NVV9</id>
        <label>THAP1</label>
    </interactant>
    <organismsDiffer>false</organismsDiffer>
    <experiments>3</experiments>
</comment>
<comment type="interaction">
    <interactant intactId="EBI-1181405">
        <id>Q13131</id>
    </interactant>
    <interactant intactId="EBI-717810">
        <id>Q08117</id>
        <label>TLE5</label>
    </interactant>
    <organismsDiffer>false</organismsDiffer>
    <experiments>3</experiments>
</comment>
<comment type="interaction">
    <interactant intactId="EBI-1181405">
        <id>Q13131</id>
    </interactant>
    <interactant intactId="EBI-719493">
        <id>P14373</id>
        <label>TRIM27</label>
    </interactant>
    <organismsDiffer>false</organismsDiffer>
    <experiments>3</experiments>
</comment>
<comment type="interaction">
    <interactant intactId="EBI-1181405">
        <id>Q13131</id>
    </interactant>
    <interactant intactId="EBI-742327">
        <id>Q15654</id>
        <label>TRIP6</label>
    </interactant>
    <organismsDiffer>false</organismsDiffer>
    <experiments>3</experiments>
</comment>
<comment type="interaction">
    <interactant intactId="EBI-1181405">
        <id>Q13131</id>
    </interactant>
    <interactant intactId="EBI-739485">
        <id>Q9Y3Q8</id>
        <label>TSC22D4</label>
    </interactant>
    <organismsDiffer>false</organismsDiffer>
    <experiments>3</experiments>
</comment>
<comment type="interaction">
    <interactant intactId="EBI-1181405">
        <id>Q13131</id>
    </interactant>
    <interactant intactId="EBI-746004">
        <id>Q5T124</id>
        <label>UBXN11</label>
    </interactant>
    <organismsDiffer>false</organismsDiffer>
    <experiments>3</experiments>
</comment>
<comment type="interaction">
    <interactant intactId="EBI-1181405">
        <id>Q13131</id>
    </interactant>
    <interactant intactId="EBI-4400866">
        <id>Q9H9H4</id>
        <label>VPS37B</label>
    </interactant>
    <organismsDiffer>false</organismsDiffer>
    <experiments>3</experiments>
</comment>
<comment type="interaction">
    <interactant intactId="EBI-1181405">
        <id>Q13131</id>
    </interactant>
    <interactant intactId="EBI-2799833">
        <id>Q8N1B4</id>
        <label>VPS52</label>
    </interactant>
    <organismsDiffer>false</organismsDiffer>
    <experiments>3</experiments>
</comment>
<comment type="interaction">
    <interactant intactId="EBI-1181405">
        <id>Q13131</id>
    </interactant>
    <interactant intactId="EBI-1044059">
        <id>P46937</id>
        <label>YAP1</label>
    </interactant>
    <organismsDiffer>false</organismsDiffer>
    <experiments>3</experiments>
</comment>
<comment type="interaction">
    <interactant intactId="EBI-1181405">
        <id>Q13131</id>
    </interactant>
    <interactant intactId="EBI-740037">
        <id>O96006</id>
        <label>ZBED1</label>
    </interactant>
    <organismsDiffer>false</organismsDiffer>
    <experiments>3</experiments>
</comment>
<comment type="subcellular location">
    <subcellularLocation>
        <location evidence="13 37">Cytoplasm</location>
    </subcellularLocation>
    <subcellularLocation>
        <location evidence="13">Nucleus</location>
    </subcellularLocation>
    <text evidence="13">In response to stress, recruited by p53/TP53 to specific promoters.</text>
</comment>
<comment type="alternative products">
    <event type="alternative splicing"/>
    <isoform>
        <id>Q13131-1</id>
        <name>1</name>
        <sequence type="displayed"/>
    </isoform>
    <isoform>
        <id>Q13131-2</id>
        <name>2</name>
        <sequence type="described" ref="VSP_035431"/>
    </isoform>
</comment>
<comment type="domain">
    <text evidence="18 38">The AIS (autoinhibitory sequence) region shows some sequence similarity with the ubiquitin-associated domains and represses kinase activity.</text>
</comment>
<comment type="PTM">
    <text evidence="2">Ubiquitinated.</text>
</comment>
<comment type="PTM">
    <text evidence="11 14 15 28">Phosphorylated at Thr-183 by STK11/LKB1 in complex with STE20-related adapter-alpha (STRADA) pseudo kinase and CAB39. Also phosphorylated at Thr-183 by CAMKK2; triggered by a rise in intracellular calcium ions, without detectable changes in the AMP/ATP ratio. CAMKK1 can also phosphorylate Thr-183, but at a much lower level. Dephosphorylated by protein phosphatase 2A and 2C (PP2A and PP2C). Phosphorylated by ULK1 and ULK2; leading to negatively regulate AMPK activity and suggesting the existence of a regulatory feedback loop between ULK1, ULK2 and AMPK. Dephosphorylated by PPM1A and PPM1B.</text>
</comment>
<comment type="PTM">
    <text evidence="30">Glycosylated; O-GlcNAcylated by OGT, promoting the AMP-activated protein kinase (AMPK) activity.</text>
</comment>
<comment type="similarity">
    <text evidence="42">Belongs to the protein kinase superfamily. CAMK Ser/Thr protein kinase family. SNF1 subfamily.</text>
</comment>
<comment type="sequence caution" evidence="42">
    <conflict type="erroneous initiation">
        <sequence resource="EMBL-CDS" id="AAA64850"/>
    </conflict>
    <text>Truncated N-terminus.</text>
</comment>
<comment type="sequence caution" evidence="42">
    <conflict type="erroneous initiation">
        <sequence resource="EMBL-CDS" id="AAD43027"/>
    </conflict>
    <text>Truncated N-terminus.</text>
</comment>
<comment type="sequence caution" evidence="42">
    <conflict type="erroneous initiation">
        <sequence resource="EMBL-CDS" id="AAH37303"/>
    </conflict>
    <text>Truncated N-terminus.</text>
</comment>
<comment type="sequence caution" evidence="42">
    <conflict type="erroneous initiation">
        <sequence resource="EMBL-CDS" id="BAA36547"/>
    </conflict>
    <text>Truncated N-terminus.</text>
</comment>
<comment type="sequence caution" evidence="42">
    <conflict type="erroneous initiation">
        <sequence resource="EMBL-CDS" id="BAG35788"/>
    </conflict>
    <text>Truncated N-terminus.</text>
</comment>
<organism>
    <name type="scientific">Homo sapiens</name>
    <name type="common">Human</name>
    <dbReference type="NCBI Taxonomy" id="9606"/>
    <lineage>
        <taxon>Eukaryota</taxon>
        <taxon>Metazoa</taxon>
        <taxon>Chordata</taxon>
        <taxon>Craniata</taxon>
        <taxon>Vertebrata</taxon>
        <taxon>Euteleostomi</taxon>
        <taxon>Mammalia</taxon>
        <taxon>Eutheria</taxon>
        <taxon>Euarchontoglires</taxon>
        <taxon>Primates</taxon>
        <taxon>Haplorrhini</taxon>
        <taxon>Catarrhini</taxon>
        <taxon>Hominidae</taxon>
        <taxon>Homo</taxon>
    </lineage>
</organism>